<accession>Q05193</accession>
<accession>A6NLM6</accession>
<accession>Q5SYX0</accession>
<accession>Q5SYX2</accession>
<accession>Q6P3T6</accession>
<accession>Q86VD2</accession>
<dbReference type="EC" id="3.6.5.5" evidence="10 14 27 28"/>
<dbReference type="EMBL" id="L07807">
    <property type="protein sequence ID" value="AAA02803.1"/>
    <property type="molecule type" value="mRNA"/>
</dbReference>
<dbReference type="EMBL" id="L07808">
    <property type="protein sequence ID" value="AAA02804.1"/>
    <property type="molecule type" value="mRNA"/>
</dbReference>
<dbReference type="EMBL" id="L07809">
    <property type="protein sequence ID" value="AAA02805.1"/>
    <property type="status" value="ALT_SEQ"/>
    <property type="molecule type" value="mRNA"/>
</dbReference>
<dbReference type="EMBL" id="L07810">
    <property type="protein sequence ID" value="AAA02806.1"/>
    <property type="molecule type" value="mRNA"/>
</dbReference>
<dbReference type="EMBL" id="AL590708">
    <property type="status" value="NOT_ANNOTATED_CDS"/>
    <property type="molecule type" value="Genomic_DNA"/>
</dbReference>
<dbReference type="EMBL" id="BC050279">
    <property type="protein sequence ID" value="AAH50279.2"/>
    <property type="molecule type" value="mRNA"/>
</dbReference>
<dbReference type="EMBL" id="BC063850">
    <property type="protein sequence ID" value="AAH63850.1"/>
    <property type="molecule type" value="mRNA"/>
</dbReference>
<dbReference type="CCDS" id="CCDS43882.1">
    <molecule id="Q05193-3"/>
</dbReference>
<dbReference type="CCDS" id="CCDS6895.1">
    <molecule id="Q05193-1"/>
</dbReference>
<dbReference type="CCDS" id="CCDS75911.1">
    <molecule id="Q05193-5"/>
</dbReference>
<dbReference type="CCDS" id="CCDS75912.1">
    <molecule id="Q05193-2"/>
</dbReference>
<dbReference type="PIR" id="A40671">
    <property type="entry name" value="A40671"/>
</dbReference>
<dbReference type="RefSeq" id="NP_001005336.1">
    <molecule id="Q05193-3"/>
    <property type="nucleotide sequence ID" value="NM_001005336.3"/>
</dbReference>
<dbReference type="RefSeq" id="NP_001275666.1">
    <molecule id="Q05193-5"/>
    <property type="nucleotide sequence ID" value="NM_001288737.2"/>
</dbReference>
<dbReference type="RefSeq" id="NP_001275667.1">
    <molecule id="Q05193-5"/>
    <property type="nucleotide sequence ID" value="NM_001288738.2"/>
</dbReference>
<dbReference type="RefSeq" id="NP_001275668.1">
    <molecule id="Q05193-2"/>
    <property type="nucleotide sequence ID" value="NM_001288739.2"/>
</dbReference>
<dbReference type="RefSeq" id="NP_004399.2">
    <molecule id="Q05193-1"/>
    <property type="nucleotide sequence ID" value="NM_004408.4"/>
</dbReference>
<dbReference type="RefSeq" id="XP_005251825.1">
    <property type="nucleotide sequence ID" value="XM_005251768.2"/>
</dbReference>
<dbReference type="RefSeq" id="XP_005251826.1">
    <property type="nucleotide sequence ID" value="XM_005251769.2"/>
</dbReference>
<dbReference type="RefSeq" id="XP_016869860.1">
    <property type="nucleotide sequence ID" value="XM_017014371.1"/>
</dbReference>
<dbReference type="PDB" id="1DYN">
    <property type="method" value="X-ray"/>
    <property type="resolution" value="2.20 A"/>
    <property type="chains" value="A/B=510-633"/>
</dbReference>
<dbReference type="PDB" id="2DYN">
    <property type="method" value="X-ray"/>
    <property type="resolution" value="2.30 A"/>
    <property type="chains" value="A/B=509-630"/>
</dbReference>
<dbReference type="PDB" id="2X2E">
    <property type="method" value="X-ray"/>
    <property type="resolution" value="2.00 A"/>
    <property type="chains" value="A/D=6-320, A/D=726-750"/>
</dbReference>
<dbReference type="PDB" id="2X2F">
    <property type="method" value="X-ray"/>
    <property type="resolution" value="2.00 A"/>
    <property type="chains" value="A/D=6-320, A/D=726-750"/>
</dbReference>
<dbReference type="PDB" id="3SNH">
    <property type="method" value="X-ray"/>
    <property type="resolution" value="3.70 A"/>
    <property type="chains" value="A=6-746"/>
</dbReference>
<dbReference type="PDB" id="3ZYC">
    <property type="method" value="X-ray"/>
    <property type="resolution" value="2.20 A"/>
    <property type="chains" value="A/D=6-320, A/D=726-750"/>
</dbReference>
<dbReference type="PDB" id="3ZYS">
    <property type="method" value="EM"/>
    <property type="resolution" value="12.20 A"/>
    <property type="chains" value="A/D=6-320, A/D=726-750, C/F=518-630"/>
</dbReference>
<dbReference type="PDB" id="4UUD">
    <property type="method" value="EM"/>
    <property type="resolution" value="12.50 A"/>
    <property type="chains" value="A/B/C/D/E/F/G/H/I/J/K/L=1-864"/>
</dbReference>
<dbReference type="PDB" id="4UUK">
    <property type="method" value="EM"/>
    <property type="resolution" value="12.50 A"/>
    <property type="chains" value="A/B/C/D/E/F/G/H/I/J/K/L=1-864"/>
</dbReference>
<dbReference type="PDB" id="5D3Q">
    <property type="method" value="X-ray"/>
    <property type="resolution" value="1.70 A"/>
    <property type="chains" value="A/B=5-320, A/B=726-746"/>
</dbReference>
<dbReference type="PDB" id="6DLU">
    <property type="method" value="EM"/>
    <property type="resolution" value="3.75 A"/>
    <property type="chains" value="B/P=1-748"/>
</dbReference>
<dbReference type="PDB" id="6DLV">
    <property type="method" value="EM"/>
    <property type="resolution" value="10.10 A"/>
    <property type="chains" value="b/c/f/g=1-748"/>
</dbReference>
<dbReference type="PDB" id="6S9A">
    <property type="method" value="X-ray"/>
    <property type="resolution" value="2.00 A"/>
    <property type="chains" value="A/B=6-746"/>
</dbReference>
<dbReference type="PDB" id="7AX3">
    <property type="method" value="EM"/>
    <property type="resolution" value="3.74 A"/>
    <property type="chains" value="A/A2/B/B2/C/C2/D/D2/E/E2/F/F2/G/G2/H/H2/I/I2/J/J2/K/L/M/N/O/P/Q/R/S/T=1-864"/>
</dbReference>
<dbReference type="PDB" id="8SXZ">
    <property type="method" value="EM"/>
    <property type="resolution" value="3.26 A"/>
    <property type="chains" value="b/c/f/g=1-750"/>
</dbReference>
<dbReference type="PDB" id="8SZ4">
    <property type="method" value="EM"/>
    <property type="resolution" value="2.86 A"/>
    <property type="chains" value="f=1-750"/>
</dbReference>
<dbReference type="PDB" id="8SZ7">
    <property type="method" value="EM"/>
    <property type="resolution" value="2.84 A"/>
    <property type="chains" value="g=1-750"/>
</dbReference>
<dbReference type="PDB" id="8SZ8">
    <property type="method" value="EM"/>
    <property type="resolution" value="3.55 A"/>
    <property type="chains" value="b/c/f/g=1-750"/>
</dbReference>
<dbReference type="PDB" id="8T0K">
    <property type="method" value="EM"/>
    <property type="resolution" value="3.58 A"/>
    <property type="chains" value="b/c/f/g=1-864"/>
</dbReference>
<dbReference type="PDB" id="8T0R">
    <property type="method" value="EM"/>
    <property type="resolution" value="3.97 A"/>
    <property type="chains" value="b/c/f/g=1-864"/>
</dbReference>
<dbReference type="PDB" id="8TYM">
    <property type="method" value="EM"/>
    <property type="resolution" value="3.58 A"/>
    <property type="chains" value="B/C/c/f=1-748"/>
</dbReference>
<dbReference type="PDB" id="8TYN">
    <property type="method" value="EM"/>
    <property type="resolution" value="3.26 A"/>
    <property type="chains" value="C/F/c/f=1-748"/>
</dbReference>
<dbReference type="PDBsum" id="1DYN"/>
<dbReference type="PDBsum" id="2DYN"/>
<dbReference type="PDBsum" id="2X2E"/>
<dbReference type="PDBsum" id="2X2F"/>
<dbReference type="PDBsum" id="3SNH"/>
<dbReference type="PDBsum" id="3ZYC"/>
<dbReference type="PDBsum" id="3ZYS"/>
<dbReference type="PDBsum" id="4UUD"/>
<dbReference type="PDBsum" id="4UUK"/>
<dbReference type="PDBsum" id="5D3Q"/>
<dbReference type="PDBsum" id="6DLU"/>
<dbReference type="PDBsum" id="6DLV"/>
<dbReference type="PDBsum" id="6S9A"/>
<dbReference type="PDBsum" id="7AX3"/>
<dbReference type="PDBsum" id="8SXZ"/>
<dbReference type="PDBsum" id="8SZ4"/>
<dbReference type="PDBsum" id="8SZ7"/>
<dbReference type="PDBsum" id="8SZ8"/>
<dbReference type="PDBsum" id="8T0K"/>
<dbReference type="PDBsum" id="8T0R"/>
<dbReference type="PDBsum" id="8TYM"/>
<dbReference type="PDBsum" id="8TYN"/>
<dbReference type="BMRB" id="Q05193"/>
<dbReference type="EMDB" id="EMD-11932"/>
<dbReference type="EMDB" id="EMD-2701"/>
<dbReference type="EMDB" id="EMD-40861"/>
<dbReference type="EMDB" id="EMD-40901"/>
<dbReference type="EMDB" id="EMD-40902"/>
<dbReference type="EMDB" id="EMD-40903"/>
<dbReference type="EMDB" id="EMD-40942"/>
<dbReference type="EMDB" id="EMD-40946"/>
<dbReference type="EMDB" id="EMD-7957"/>
<dbReference type="EMDB" id="EMD-7958"/>
<dbReference type="SMR" id="Q05193"/>
<dbReference type="BioGRID" id="108099">
    <property type="interactions" value="145"/>
</dbReference>
<dbReference type="DIP" id="DIP-36242N"/>
<dbReference type="FunCoup" id="Q05193">
    <property type="interactions" value="1602"/>
</dbReference>
<dbReference type="IntAct" id="Q05193">
    <property type="interactions" value="73"/>
</dbReference>
<dbReference type="MINT" id="Q05193"/>
<dbReference type="STRING" id="9606.ENSP00000362014"/>
<dbReference type="BindingDB" id="Q05193"/>
<dbReference type="ChEMBL" id="CHEMBL4958"/>
<dbReference type="DrugCentral" id="Q05193"/>
<dbReference type="GlyGen" id="Q05193">
    <property type="glycosylation" value="2 sites, 1 O-linked glycan (1 site)"/>
</dbReference>
<dbReference type="iPTMnet" id="Q05193"/>
<dbReference type="PhosphoSitePlus" id="Q05193"/>
<dbReference type="SwissPalm" id="Q05193"/>
<dbReference type="BioMuta" id="DNM1"/>
<dbReference type="DMDM" id="172046078"/>
<dbReference type="jPOST" id="Q05193"/>
<dbReference type="MassIVE" id="Q05193"/>
<dbReference type="PaxDb" id="9606-ENSP00000362014"/>
<dbReference type="PeptideAtlas" id="Q05193"/>
<dbReference type="ProteomicsDB" id="58309">
    <molecule id="Q05193-1"/>
</dbReference>
<dbReference type="ProteomicsDB" id="58310">
    <molecule id="Q05193-2"/>
</dbReference>
<dbReference type="ProteomicsDB" id="58311">
    <molecule id="Q05193-3"/>
</dbReference>
<dbReference type="ProteomicsDB" id="58313">
    <molecule id="Q05193-5"/>
</dbReference>
<dbReference type="Pumba" id="Q05193"/>
<dbReference type="Antibodypedia" id="3472">
    <property type="antibodies" value="689 antibodies from 46 providers"/>
</dbReference>
<dbReference type="DNASU" id="1759"/>
<dbReference type="Ensembl" id="ENST00000341179.11">
    <molecule id="Q05193-3"/>
    <property type="protein sequence ID" value="ENSP00000345680.7"/>
    <property type="gene ID" value="ENSG00000106976.22"/>
</dbReference>
<dbReference type="Ensembl" id="ENST00000372923.8">
    <molecule id="Q05193-1"/>
    <property type="protein sequence ID" value="ENSP00000362014.4"/>
    <property type="gene ID" value="ENSG00000106976.22"/>
</dbReference>
<dbReference type="Ensembl" id="ENST00000393594.7">
    <molecule id="Q05193-5"/>
    <property type="protein sequence ID" value="ENSP00000377219.3"/>
    <property type="gene ID" value="ENSG00000106976.22"/>
</dbReference>
<dbReference type="Ensembl" id="ENST00000475805.5">
    <molecule id="Q05193-5"/>
    <property type="protein sequence ID" value="ENSP00000419225.1"/>
    <property type="gene ID" value="ENSG00000106976.22"/>
</dbReference>
<dbReference type="Ensembl" id="ENST00000486160.3">
    <molecule id="Q05193-2"/>
    <property type="protein sequence ID" value="ENSP00000420045.1"/>
    <property type="gene ID" value="ENSG00000106976.22"/>
</dbReference>
<dbReference type="Ensembl" id="ENST00000627543.2">
    <molecule id="Q05193-3"/>
    <property type="protein sequence ID" value="ENSP00000487310.1"/>
    <property type="gene ID" value="ENSG00000106976.22"/>
</dbReference>
<dbReference type="GeneID" id="1759"/>
<dbReference type="KEGG" id="hsa:1759"/>
<dbReference type="MANE-Select" id="ENST00000372923.8">
    <property type="protein sequence ID" value="ENSP00000362014.4"/>
    <property type="RefSeq nucleotide sequence ID" value="NM_004408.4"/>
    <property type="RefSeq protein sequence ID" value="NP_004399.2"/>
</dbReference>
<dbReference type="UCSC" id="uc064wcg.1">
    <molecule id="Q05193-1"/>
    <property type="organism name" value="human"/>
</dbReference>
<dbReference type="AGR" id="HGNC:2972"/>
<dbReference type="CTD" id="1759"/>
<dbReference type="DisGeNET" id="1759"/>
<dbReference type="GeneCards" id="DNM1"/>
<dbReference type="HGNC" id="HGNC:2972">
    <property type="gene designation" value="DNM1"/>
</dbReference>
<dbReference type="HPA" id="ENSG00000106976">
    <property type="expression patterns" value="Tissue enriched (brain)"/>
</dbReference>
<dbReference type="MalaCards" id="DNM1"/>
<dbReference type="MIM" id="602377">
    <property type="type" value="gene"/>
</dbReference>
<dbReference type="MIM" id="616346">
    <property type="type" value="phenotype"/>
</dbReference>
<dbReference type="MIM" id="620352">
    <property type="type" value="phenotype"/>
</dbReference>
<dbReference type="neXtProt" id="NX_Q05193"/>
<dbReference type="OpenTargets" id="ENSG00000106976"/>
<dbReference type="Orphanet" id="2382">
    <property type="disease" value="Lennox-Gastaut syndrome"/>
</dbReference>
<dbReference type="Orphanet" id="442835">
    <property type="disease" value="Non-specific early-onset epileptic encephalopathy"/>
</dbReference>
<dbReference type="PharmGKB" id="PA27440"/>
<dbReference type="VEuPathDB" id="HostDB:ENSG00000106976"/>
<dbReference type="eggNOG" id="KOG0446">
    <property type="taxonomic scope" value="Eukaryota"/>
</dbReference>
<dbReference type="GeneTree" id="ENSGT00940000155214"/>
<dbReference type="InParanoid" id="Q05193"/>
<dbReference type="OMA" id="MQMVQTF"/>
<dbReference type="OrthoDB" id="9480023at2759"/>
<dbReference type="PAN-GO" id="Q05193">
    <property type="GO annotations" value="8 GO annotations based on evolutionary models"/>
</dbReference>
<dbReference type="PhylomeDB" id="Q05193"/>
<dbReference type="TreeFam" id="TF300362"/>
<dbReference type="BRENDA" id="3.6.5.5">
    <property type="organism ID" value="2681"/>
</dbReference>
<dbReference type="PathwayCommons" id="Q05193"/>
<dbReference type="Reactome" id="R-HSA-166016">
    <property type="pathway name" value="Toll Like Receptor 4 (TLR4) Cascade"/>
</dbReference>
<dbReference type="Reactome" id="R-HSA-177504">
    <property type="pathway name" value="Retrograde neurotrophin signalling"/>
</dbReference>
<dbReference type="Reactome" id="R-HSA-190873">
    <property type="pathway name" value="Gap junction degradation"/>
</dbReference>
<dbReference type="Reactome" id="R-HSA-196025">
    <property type="pathway name" value="Formation of annular gap junctions"/>
</dbReference>
<dbReference type="Reactome" id="R-HSA-2132295">
    <property type="pathway name" value="MHC class II antigen presentation"/>
</dbReference>
<dbReference type="Reactome" id="R-HSA-3928665">
    <property type="pathway name" value="EPH-ephrin mediated repulsion of cells"/>
</dbReference>
<dbReference type="Reactome" id="R-HSA-437239">
    <property type="pathway name" value="Recycling pathway of L1"/>
</dbReference>
<dbReference type="Reactome" id="R-HSA-8856828">
    <property type="pathway name" value="Clathrin-mediated endocytosis"/>
</dbReference>
<dbReference type="SignaLink" id="Q05193"/>
<dbReference type="SIGNOR" id="Q05193"/>
<dbReference type="BioGRID-ORCS" id="1759">
    <property type="hits" value="70 hits in 1161 CRISPR screens"/>
</dbReference>
<dbReference type="CD-CODE" id="FB4E32DD">
    <property type="entry name" value="Presynaptic clusters and postsynaptic densities"/>
</dbReference>
<dbReference type="ChiTaRS" id="DNM1">
    <property type="organism name" value="human"/>
</dbReference>
<dbReference type="EvolutionaryTrace" id="Q05193"/>
<dbReference type="GeneWiki" id="DNM1"/>
<dbReference type="GenomeRNAi" id="1759"/>
<dbReference type="Pharos" id="Q05193">
    <property type="development level" value="Tbio"/>
</dbReference>
<dbReference type="PRO" id="PR:Q05193"/>
<dbReference type="Proteomes" id="UP000005640">
    <property type="component" value="Chromosome 9"/>
</dbReference>
<dbReference type="RNAct" id="Q05193">
    <property type="molecule type" value="protein"/>
</dbReference>
<dbReference type="Bgee" id="ENSG00000106976">
    <property type="expression patterns" value="Expressed in right hemisphere of cerebellum and 175 other cell types or tissues"/>
</dbReference>
<dbReference type="ExpressionAtlas" id="Q05193">
    <property type="expression patterns" value="baseline and differential"/>
</dbReference>
<dbReference type="GO" id="GO:0042995">
    <property type="term" value="C:cell projection"/>
    <property type="evidence" value="ECO:0007669"/>
    <property type="project" value="UniProtKB-KW"/>
</dbReference>
<dbReference type="GO" id="GO:0042583">
    <property type="term" value="C:chromaffin granule"/>
    <property type="evidence" value="ECO:0007669"/>
    <property type="project" value="UniProtKB-SubCell"/>
</dbReference>
<dbReference type="GO" id="GO:0005905">
    <property type="term" value="C:clathrin-coated pit"/>
    <property type="evidence" value="ECO:0000314"/>
    <property type="project" value="UniProtKB"/>
</dbReference>
<dbReference type="GO" id="GO:0005737">
    <property type="term" value="C:cytoplasm"/>
    <property type="evidence" value="ECO:0000318"/>
    <property type="project" value="GO_Central"/>
</dbReference>
<dbReference type="GO" id="GO:0030139">
    <property type="term" value="C:endocytic vesicle"/>
    <property type="evidence" value="ECO:0000250"/>
    <property type="project" value="UniProtKB"/>
</dbReference>
<dbReference type="GO" id="GO:0070062">
    <property type="term" value="C:extracellular exosome"/>
    <property type="evidence" value="ECO:0007005"/>
    <property type="project" value="UniProtKB"/>
</dbReference>
<dbReference type="GO" id="GO:0005874">
    <property type="term" value="C:microtubule"/>
    <property type="evidence" value="ECO:0000318"/>
    <property type="project" value="GO_Central"/>
</dbReference>
<dbReference type="GO" id="GO:0005886">
    <property type="term" value="C:plasma membrane"/>
    <property type="evidence" value="ECO:0000318"/>
    <property type="project" value="GO_Central"/>
</dbReference>
<dbReference type="GO" id="GO:0098793">
    <property type="term" value="C:presynapse"/>
    <property type="evidence" value="ECO:0000250"/>
    <property type="project" value="UniProtKB"/>
</dbReference>
<dbReference type="GO" id="GO:0045202">
    <property type="term" value="C:synapse"/>
    <property type="evidence" value="ECO:0000318"/>
    <property type="project" value="GO_Central"/>
</dbReference>
<dbReference type="GO" id="GO:0019003">
    <property type="term" value="F:GDP binding"/>
    <property type="evidence" value="ECO:0000250"/>
    <property type="project" value="UniProtKB"/>
</dbReference>
<dbReference type="GO" id="GO:0005525">
    <property type="term" value="F:GTP binding"/>
    <property type="evidence" value="ECO:0007669"/>
    <property type="project" value="UniProtKB-KW"/>
</dbReference>
<dbReference type="GO" id="GO:0003924">
    <property type="term" value="F:GTPase activity"/>
    <property type="evidence" value="ECO:0000314"/>
    <property type="project" value="UniProtKB"/>
</dbReference>
<dbReference type="GO" id="GO:0042802">
    <property type="term" value="F:identical protein binding"/>
    <property type="evidence" value="ECO:0000353"/>
    <property type="project" value="IntAct"/>
</dbReference>
<dbReference type="GO" id="GO:0008017">
    <property type="term" value="F:microtubule binding"/>
    <property type="evidence" value="ECO:0000318"/>
    <property type="project" value="GO_Central"/>
</dbReference>
<dbReference type="GO" id="GO:0005547">
    <property type="term" value="F:phosphatidylinositol-3,4,5-trisphosphate binding"/>
    <property type="evidence" value="ECO:0000314"/>
    <property type="project" value="UniProtKB"/>
</dbReference>
<dbReference type="GO" id="GO:0005546">
    <property type="term" value="F:phosphatidylinositol-4,5-bisphosphate binding"/>
    <property type="evidence" value="ECO:0000314"/>
    <property type="project" value="UniProtKB"/>
</dbReference>
<dbReference type="GO" id="GO:0042803">
    <property type="term" value="F:protein homodimerization activity"/>
    <property type="evidence" value="ECO:0000314"/>
    <property type="project" value="UniProtKB"/>
</dbReference>
<dbReference type="GO" id="GO:0019901">
    <property type="term" value="F:protein kinase binding"/>
    <property type="evidence" value="ECO:0000250"/>
    <property type="project" value="ParkinsonsUK-UCL"/>
</dbReference>
<dbReference type="GO" id="GO:0003723">
    <property type="term" value="F:RNA binding"/>
    <property type="evidence" value="ECO:0007005"/>
    <property type="project" value="UniProtKB"/>
</dbReference>
<dbReference type="GO" id="GO:0099049">
    <property type="term" value="P:clathrin coat assembly involved in endocytosis"/>
    <property type="evidence" value="ECO:0000250"/>
    <property type="project" value="UniProtKB"/>
</dbReference>
<dbReference type="GO" id="GO:0006897">
    <property type="term" value="P:endocytosis"/>
    <property type="evidence" value="ECO:0000315"/>
    <property type="project" value="BHF-UCL"/>
</dbReference>
<dbReference type="GO" id="GO:0007032">
    <property type="term" value="P:endosome organization"/>
    <property type="evidence" value="ECO:0000315"/>
    <property type="project" value="BHF-UCL"/>
</dbReference>
<dbReference type="GO" id="GO:0051260">
    <property type="term" value="P:protein homooligomerization"/>
    <property type="evidence" value="ECO:0000314"/>
    <property type="project" value="UniProtKB"/>
</dbReference>
<dbReference type="GO" id="GO:0051289">
    <property type="term" value="P:protein homotetramerization"/>
    <property type="evidence" value="ECO:0000314"/>
    <property type="project" value="UniProtKB"/>
</dbReference>
<dbReference type="GO" id="GO:0031623">
    <property type="term" value="P:receptor internalization"/>
    <property type="evidence" value="ECO:0000318"/>
    <property type="project" value="GO_Central"/>
</dbReference>
<dbReference type="GO" id="GO:0006898">
    <property type="term" value="P:receptor-mediated endocytosis"/>
    <property type="evidence" value="ECO:0000314"/>
    <property type="project" value="UniProtKB"/>
</dbReference>
<dbReference type="GO" id="GO:0097494">
    <property type="term" value="P:regulation of vesicle size"/>
    <property type="evidence" value="ECO:0000250"/>
    <property type="project" value="UniProtKB"/>
</dbReference>
<dbReference type="GO" id="GO:0016185">
    <property type="term" value="P:synaptic vesicle budding from presynaptic endocytic zone membrane"/>
    <property type="evidence" value="ECO:0000318"/>
    <property type="project" value="GO_Central"/>
</dbReference>
<dbReference type="GO" id="GO:0099050">
    <property type="term" value="P:vesicle scission"/>
    <property type="evidence" value="ECO:0000314"/>
    <property type="project" value="UniProtKB"/>
</dbReference>
<dbReference type="CDD" id="cd08771">
    <property type="entry name" value="DLP_1"/>
    <property type="match status" value="1"/>
</dbReference>
<dbReference type="CDD" id="cd01256">
    <property type="entry name" value="PH_dynamin"/>
    <property type="match status" value="1"/>
</dbReference>
<dbReference type="DisProt" id="DP02976"/>
<dbReference type="FunFam" id="1.20.120.1240:FF:000019">
    <property type="entry name" value="Dynamin 2"/>
    <property type="match status" value="1"/>
</dbReference>
<dbReference type="FunFam" id="1.20.120.1240:FF:000014">
    <property type="entry name" value="Dynamin 2b"/>
    <property type="match status" value="1"/>
</dbReference>
<dbReference type="FunFam" id="3.40.50.300:FF:000045">
    <property type="entry name" value="dynamin-1 isoform X2"/>
    <property type="match status" value="1"/>
</dbReference>
<dbReference type="FunFam" id="2.30.29.30:FF:000555">
    <property type="entry name" value="dynamin-1-like isoform X1"/>
    <property type="match status" value="1"/>
</dbReference>
<dbReference type="Gene3D" id="1.20.120.1240">
    <property type="entry name" value="Dynamin, middle domain"/>
    <property type="match status" value="1"/>
</dbReference>
<dbReference type="Gene3D" id="3.40.50.300">
    <property type="entry name" value="P-loop containing nucleotide triphosphate hydrolases"/>
    <property type="match status" value="1"/>
</dbReference>
<dbReference type="Gene3D" id="2.30.29.30">
    <property type="entry name" value="Pleckstrin-homology domain (PH domain)/Phosphotyrosine-binding domain (PTB)"/>
    <property type="match status" value="1"/>
</dbReference>
<dbReference type="InterPro" id="IPR022812">
    <property type="entry name" value="Dynamin"/>
</dbReference>
<dbReference type="InterPro" id="IPR001401">
    <property type="entry name" value="Dynamin_GTPase"/>
</dbReference>
<dbReference type="InterPro" id="IPR019762">
    <property type="entry name" value="Dynamin_GTPase_CS"/>
</dbReference>
<dbReference type="InterPro" id="IPR045063">
    <property type="entry name" value="Dynamin_N"/>
</dbReference>
<dbReference type="InterPro" id="IPR000375">
    <property type="entry name" value="Dynamin_stalk"/>
</dbReference>
<dbReference type="InterPro" id="IPR030381">
    <property type="entry name" value="G_DYNAMIN_dom"/>
</dbReference>
<dbReference type="InterPro" id="IPR003130">
    <property type="entry name" value="GED"/>
</dbReference>
<dbReference type="InterPro" id="IPR020850">
    <property type="entry name" value="GED_dom"/>
</dbReference>
<dbReference type="InterPro" id="IPR027417">
    <property type="entry name" value="P-loop_NTPase"/>
</dbReference>
<dbReference type="InterPro" id="IPR011993">
    <property type="entry name" value="PH-like_dom_sf"/>
</dbReference>
<dbReference type="InterPro" id="IPR001849">
    <property type="entry name" value="PH_domain"/>
</dbReference>
<dbReference type="PANTHER" id="PTHR11566">
    <property type="entry name" value="DYNAMIN"/>
    <property type="match status" value="1"/>
</dbReference>
<dbReference type="PANTHER" id="PTHR11566:SF32">
    <property type="entry name" value="DYNAMIN-1"/>
    <property type="match status" value="1"/>
</dbReference>
<dbReference type="Pfam" id="PF01031">
    <property type="entry name" value="Dynamin_M"/>
    <property type="match status" value="1"/>
</dbReference>
<dbReference type="Pfam" id="PF00350">
    <property type="entry name" value="Dynamin_N"/>
    <property type="match status" value="1"/>
</dbReference>
<dbReference type="Pfam" id="PF02212">
    <property type="entry name" value="GED"/>
    <property type="match status" value="1"/>
</dbReference>
<dbReference type="Pfam" id="PF00169">
    <property type="entry name" value="PH"/>
    <property type="match status" value="1"/>
</dbReference>
<dbReference type="PRINTS" id="PR00195">
    <property type="entry name" value="DYNAMIN"/>
</dbReference>
<dbReference type="SMART" id="SM00053">
    <property type="entry name" value="DYNc"/>
    <property type="match status" value="1"/>
</dbReference>
<dbReference type="SMART" id="SM00302">
    <property type="entry name" value="GED"/>
    <property type="match status" value="1"/>
</dbReference>
<dbReference type="SMART" id="SM00233">
    <property type="entry name" value="PH"/>
    <property type="match status" value="1"/>
</dbReference>
<dbReference type="SUPFAM" id="SSF52540">
    <property type="entry name" value="P-loop containing nucleoside triphosphate hydrolases"/>
    <property type="match status" value="1"/>
</dbReference>
<dbReference type="SUPFAM" id="SSF50729">
    <property type="entry name" value="PH domain-like"/>
    <property type="match status" value="1"/>
</dbReference>
<dbReference type="PROSITE" id="PS00410">
    <property type="entry name" value="G_DYNAMIN_1"/>
    <property type="match status" value="1"/>
</dbReference>
<dbReference type="PROSITE" id="PS51718">
    <property type="entry name" value="G_DYNAMIN_2"/>
    <property type="match status" value="1"/>
</dbReference>
<dbReference type="PROSITE" id="PS51388">
    <property type="entry name" value="GED"/>
    <property type="match status" value="1"/>
</dbReference>
<dbReference type="PROSITE" id="PS50003">
    <property type="entry name" value="PH_DOMAIN"/>
    <property type="match status" value="1"/>
</dbReference>
<sequence>MGNRGMEDLIPLVNRLQDAFSAIGQNADLDLPQIAVVGGQSAGKSSVLENFVGRDFLPRGSGIVTRRPLVLQLVNATTEYAEFLHCKGKKFTDFEEVRLEIEAETDRVTGTNKGISPVPINLRVYSPHVLNLTLVDLPGMTKVPVGDQPPDIEFQIRDMLMQFVTKENCLILAVSPANSDLANSDALKVAKEVDPQGQRTIGVITKLDLMDEGTDARDVLENKLLPLRRGYIGVVNRSQKDIDGKKDITAALAAERKFFLSHPSYRHLADRMGTPYLQKVLNQQLTNHIRDTLPGLRNKLQSQLLSIEKEVEEYKNFRPDDPARKTKALLQMVQQFAVDFEKRIEGSGDQIDTYELSGGARINRIFHERFPFELVKMEFDEKELRREISYAIKNIHGIRTGLFTPDMAFETIVKKQVKKIREPCLKCVDMVISELISTVRQCTKKLQQYPRLREEMERIVTTHIREREGRTKEQVMLLIDIELAYMNTNHEDFIGFANAQQRSNQMNKKKTSGNQDEILVIRKGWLTINNIGIMKGGSKEYWFVLTAENLSWYKDDEEKEKKYMLSVDNLKLRDVEKGFMSSKHIFALFNTEQRNVYKDYRQLELACETQEEVDSWKASFLRAGVYPERVGDKEKASETEENGSDSFMHSMDPQLERQVETIRNLVDSYMAIVNKTVRDLMPKTIMHLMINNTKEFIFSELLANLYSCGDQNTLMEESAEQAQRRDEMLRMYHALKEALSIIGDINTTTVSTPMPPPVDDSWLQVQSVPAGRRSPTSSPTPQRRAPAVPPARPGSRGPAPGPPPAGSALGGAPPVPSRPGASPDPFGPPPQVPSRPNRAPPGVPSRSGQASPSRPESPRPPFDL</sequence>
<gene>
    <name evidence="36" type="primary">DNM1</name>
    <name type="synonym">DNM</name>
</gene>
<organism>
    <name type="scientific">Homo sapiens</name>
    <name type="common">Human</name>
    <dbReference type="NCBI Taxonomy" id="9606"/>
    <lineage>
        <taxon>Eukaryota</taxon>
        <taxon>Metazoa</taxon>
        <taxon>Chordata</taxon>
        <taxon>Craniata</taxon>
        <taxon>Vertebrata</taxon>
        <taxon>Euteleostomi</taxon>
        <taxon>Mammalia</taxon>
        <taxon>Eutheria</taxon>
        <taxon>Euarchontoglires</taxon>
        <taxon>Primates</taxon>
        <taxon>Haplorrhini</taxon>
        <taxon>Catarrhini</taxon>
        <taxon>Hominidae</taxon>
        <taxon>Homo</taxon>
    </lineage>
</organism>
<keyword id="KW-0002">3D-structure</keyword>
<keyword id="KW-0025">Alternative splicing</keyword>
<keyword id="KW-1003">Cell membrane</keyword>
<keyword id="KW-0966">Cell projection</keyword>
<keyword id="KW-0168">Coated pit</keyword>
<keyword id="KW-0968">Cytoplasmic vesicle</keyword>
<keyword id="KW-0225">Disease variant</keyword>
<keyword id="KW-0254">Endocytosis</keyword>
<keyword id="KW-0887">Epilepsy</keyword>
<keyword id="KW-0342">GTP-binding</keyword>
<keyword id="KW-0378">Hydrolase</keyword>
<keyword id="KW-0472">Membrane</keyword>
<keyword id="KW-0488">Methylation</keyword>
<keyword id="KW-0493">Microtubule</keyword>
<keyword id="KW-0505">Motor protein</keyword>
<keyword id="KW-0944">Nitration</keyword>
<keyword id="KW-0547">Nucleotide-binding</keyword>
<keyword id="KW-0597">Phosphoprotein</keyword>
<keyword id="KW-1267">Proteomics identification</keyword>
<keyword id="KW-1185">Reference proteome</keyword>
<keyword id="KW-0770">Synapse</keyword>
<evidence type="ECO:0000250" key="1">
    <source>
        <dbReference type="UniProtKB" id="P21575"/>
    </source>
</evidence>
<evidence type="ECO:0000250" key="2">
    <source>
        <dbReference type="UniProtKB" id="P39053"/>
    </source>
</evidence>
<evidence type="ECO:0000250" key="3">
    <source>
        <dbReference type="UniProtKB" id="Q08DF4"/>
    </source>
</evidence>
<evidence type="ECO:0000255" key="4">
    <source>
        <dbReference type="PROSITE-ProRule" id="PRU00145"/>
    </source>
</evidence>
<evidence type="ECO:0000255" key="5">
    <source>
        <dbReference type="PROSITE-ProRule" id="PRU00720"/>
    </source>
</evidence>
<evidence type="ECO:0000255" key="6">
    <source>
        <dbReference type="PROSITE-ProRule" id="PRU01055"/>
    </source>
</evidence>
<evidence type="ECO:0000256" key="7">
    <source>
        <dbReference type="SAM" id="MobiDB-lite"/>
    </source>
</evidence>
<evidence type="ECO:0000269" key="8">
    <source>
    </source>
</evidence>
<evidence type="ECO:0000269" key="9">
    <source>
    </source>
</evidence>
<evidence type="ECO:0000269" key="10">
    <source>
    </source>
</evidence>
<evidence type="ECO:0000269" key="11">
    <source>
    </source>
</evidence>
<evidence type="ECO:0000269" key="12">
    <source>
    </source>
</evidence>
<evidence type="ECO:0000269" key="13">
    <source>
    </source>
</evidence>
<evidence type="ECO:0000269" key="14">
    <source>
    </source>
</evidence>
<evidence type="ECO:0000269" key="15">
    <source>
    </source>
</evidence>
<evidence type="ECO:0000269" key="16">
    <source>
    </source>
</evidence>
<evidence type="ECO:0000269" key="17">
    <source>
    </source>
</evidence>
<evidence type="ECO:0000269" key="18">
    <source>
    </source>
</evidence>
<evidence type="ECO:0000269" key="19">
    <source>
    </source>
</evidence>
<evidence type="ECO:0000269" key="20">
    <source>
    </source>
</evidence>
<evidence type="ECO:0000269" key="21">
    <source>
    </source>
</evidence>
<evidence type="ECO:0000269" key="22">
    <source>
    </source>
</evidence>
<evidence type="ECO:0000269" key="23">
    <source>
    </source>
</evidence>
<evidence type="ECO:0000269" key="24">
    <source>
    </source>
</evidence>
<evidence type="ECO:0000269" key="25">
    <source>
    </source>
</evidence>
<evidence type="ECO:0000269" key="26">
    <source>
    </source>
</evidence>
<evidence type="ECO:0000269" key="27">
    <source>
    </source>
</evidence>
<evidence type="ECO:0000269" key="28">
    <source>
    </source>
</evidence>
<evidence type="ECO:0000269" key="29">
    <source>
    </source>
</evidence>
<evidence type="ECO:0000269" key="30">
    <source>
    </source>
</evidence>
<evidence type="ECO:0000303" key="31">
    <source>
    </source>
</evidence>
<evidence type="ECO:0000303" key="32">
    <source>
    </source>
</evidence>
<evidence type="ECO:0000303" key="33">
    <source>
    </source>
</evidence>
<evidence type="ECO:0000303" key="34">
    <source>
    </source>
</evidence>
<evidence type="ECO:0000305" key="35"/>
<evidence type="ECO:0000312" key="36">
    <source>
        <dbReference type="HGNC" id="HGNC:2972"/>
    </source>
</evidence>
<evidence type="ECO:0007744" key="37">
    <source>
        <dbReference type="PDB" id="1DYN"/>
    </source>
</evidence>
<evidence type="ECO:0007744" key="38">
    <source>
        <dbReference type="PDB" id="2DYN"/>
    </source>
</evidence>
<evidence type="ECO:0007744" key="39">
    <source>
        <dbReference type="PDB" id="2X2E"/>
    </source>
</evidence>
<evidence type="ECO:0007744" key="40">
    <source>
        <dbReference type="PDB" id="2X2F"/>
    </source>
</evidence>
<evidence type="ECO:0007744" key="41">
    <source>
        <dbReference type="PDB" id="5D3Q"/>
    </source>
</evidence>
<evidence type="ECO:0007744" key="42">
    <source>
        <dbReference type="PDB" id="6DLU"/>
    </source>
</evidence>
<evidence type="ECO:0007744" key="43">
    <source>
        <dbReference type="PDB" id="6DLV"/>
    </source>
</evidence>
<evidence type="ECO:0007829" key="44">
    <source>
        <dbReference type="PDB" id="1DYN"/>
    </source>
</evidence>
<evidence type="ECO:0007829" key="45">
    <source>
        <dbReference type="PDB" id="3ZYC"/>
    </source>
</evidence>
<evidence type="ECO:0007829" key="46">
    <source>
        <dbReference type="PDB" id="5D3Q"/>
    </source>
</evidence>
<evidence type="ECO:0007829" key="47">
    <source>
        <dbReference type="PDB" id="6S9A"/>
    </source>
</evidence>
<evidence type="ECO:0007829" key="48">
    <source>
        <dbReference type="PDB" id="8TYN"/>
    </source>
</evidence>
<protein>
    <recommendedName>
        <fullName evidence="34">Dynamin-1</fullName>
        <ecNumber evidence="10 14 27 28">3.6.5.5</ecNumber>
    </recommendedName>
    <alternativeName>
        <fullName evidence="32">Dynamin</fullName>
    </alternativeName>
    <alternativeName>
        <fullName evidence="33">Dynamin I</fullName>
    </alternativeName>
</protein>
<feature type="chain" id="PRO_0000206563" description="Dynamin-1">
    <location>
        <begin position="1"/>
        <end position="864"/>
    </location>
</feature>
<feature type="domain" description="Dynamin-type G" evidence="6">
    <location>
        <begin position="28"/>
        <end position="294"/>
    </location>
</feature>
<feature type="domain" description="PH" evidence="4">
    <location>
        <begin position="519"/>
        <end position="625"/>
    </location>
</feature>
<feature type="domain" description="GED" evidence="5">
    <location>
        <begin position="659"/>
        <end position="750"/>
    </location>
</feature>
<feature type="region of interest" description="G1 motif" evidence="6">
    <location>
        <begin position="38"/>
        <end position="45"/>
    </location>
</feature>
<feature type="region of interest" description="G2 motif" evidence="6">
    <location>
        <begin position="64"/>
        <end position="66"/>
    </location>
</feature>
<feature type="region of interest" description="G3 motif" evidence="6">
    <location>
        <begin position="136"/>
        <end position="139"/>
    </location>
</feature>
<feature type="region of interest" description="G4 motif" evidence="6">
    <location>
        <begin position="205"/>
        <end position="208"/>
    </location>
</feature>
<feature type="region of interest" description="G5 motif" evidence="6">
    <location>
        <begin position="235"/>
        <end position="238"/>
    </location>
</feature>
<feature type="region of interest" description="Disordered" evidence="7">
    <location>
        <begin position="767"/>
        <end position="864"/>
    </location>
</feature>
<feature type="compositionally biased region" description="Pro residues" evidence="7">
    <location>
        <begin position="825"/>
        <end position="843"/>
    </location>
</feature>
<feature type="binding site" evidence="14 18 41">
    <location>
        <position position="41"/>
    </location>
    <ligand>
        <name>GDP</name>
        <dbReference type="ChEBI" id="CHEBI:58189"/>
    </ligand>
</feature>
<feature type="binding site" evidence="14 18 39 40 41">
    <location>
        <position position="43"/>
    </location>
    <ligand>
        <name>GDP</name>
        <dbReference type="ChEBI" id="CHEBI:58189"/>
    </ligand>
</feature>
<feature type="binding site" evidence="14 18 21 39 40 41 42">
    <location>
        <position position="44"/>
    </location>
    <ligand>
        <name>GDP</name>
        <dbReference type="ChEBI" id="CHEBI:58189"/>
    </ligand>
</feature>
<feature type="binding site" evidence="14 18 39 40 41">
    <location>
        <position position="45"/>
    </location>
    <ligand>
        <name>GDP</name>
        <dbReference type="ChEBI" id="CHEBI:58189"/>
    </ligand>
</feature>
<feature type="binding site" evidence="14 18 21 39 40 41 42">
    <location>
        <position position="46"/>
    </location>
    <ligand>
        <name>GDP</name>
        <dbReference type="ChEBI" id="CHEBI:58189"/>
    </ligand>
</feature>
<feature type="binding site" evidence="18 41">
    <location>
        <position position="59"/>
    </location>
    <ligand>
        <name>GDP</name>
        <dbReference type="ChEBI" id="CHEBI:58189"/>
    </ligand>
</feature>
<feature type="binding site" evidence="14 39 40">
    <location>
        <position position="60"/>
    </location>
    <ligand>
        <name>GDP</name>
        <dbReference type="ChEBI" id="CHEBI:58189"/>
    </ligand>
</feature>
<feature type="binding site" evidence="14 18 39 40 41">
    <location>
        <position position="206"/>
    </location>
    <ligand>
        <name>GDP</name>
        <dbReference type="ChEBI" id="CHEBI:58189"/>
    </ligand>
</feature>
<feature type="binding site" evidence="14 18 39 40 41">
    <location>
        <position position="208"/>
    </location>
    <ligand>
        <name>GDP</name>
        <dbReference type="ChEBI" id="CHEBI:58189"/>
    </ligand>
</feature>
<feature type="binding site" evidence="14 18 21 39 41 42">
    <location>
        <position position="211"/>
    </location>
    <ligand>
        <name>GDP</name>
        <dbReference type="ChEBI" id="CHEBI:58189"/>
    </ligand>
</feature>
<feature type="binding site" evidence="14 18 21 39 40 41 42">
    <location>
        <position position="236"/>
    </location>
    <ligand>
        <name>GDP</name>
        <dbReference type="ChEBI" id="CHEBI:58189"/>
    </ligand>
</feature>
<feature type="binding site" evidence="14 18 21 39 40 41 42">
    <location>
        <position position="237"/>
    </location>
    <ligand>
        <name>GDP</name>
        <dbReference type="ChEBI" id="CHEBI:58189"/>
    </ligand>
</feature>
<feature type="binding site" evidence="14 18 21 39 40 41 42">
    <location>
        <position position="239"/>
    </location>
    <ligand>
        <name>GDP</name>
        <dbReference type="ChEBI" id="CHEBI:58189"/>
    </ligand>
</feature>
<feature type="modified residue" description="Phosphotyrosine" evidence="2">
    <location>
        <position position="80"/>
    </location>
</feature>
<feature type="modified residue" description="3'-nitrotyrosine; alternate" evidence="2">
    <location>
        <position position="125"/>
    </location>
</feature>
<feature type="modified residue" description="Phosphotyrosine; alternate" evidence="2">
    <location>
        <position position="125"/>
    </location>
</feature>
<feature type="modified residue" description="Phosphoserine" evidence="2">
    <location>
        <position position="306"/>
    </location>
</feature>
<feature type="modified residue" description="Phosphoserine" evidence="1">
    <location>
        <position position="347"/>
    </location>
</feature>
<feature type="modified residue" description="Phosphotyrosine" evidence="2">
    <location>
        <position position="354"/>
    </location>
</feature>
<feature type="modified residue" description="Phosphoserine" evidence="2">
    <location>
        <position position="512"/>
    </location>
</feature>
<feature type="modified residue" description="Phosphoserine; by GSK3-beta" evidence="20">
    <location>
        <position position="774"/>
    </location>
</feature>
<feature type="modified residue" description="Phosphoserine" evidence="1">
    <location>
        <position position="778"/>
    </location>
</feature>
<feature type="modified residue" description="Omega-N-methylarginine" evidence="2">
    <location>
        <position position="796"/>
    </location>
</feature>
<feature type="modified residue" description="Phosphoserine" evidence="1">
    <location>
        <position position="822"/>
    </location>
</feature>
<feature type="modified residue" description="Phosphoserine" evidence="1">
    <location>
        <position position="851"/>
    </location>
</feature>
<feature type="modified residue" description="Phosphoserine" evidence="1">
    <location>
        <position position="857"/>
    </location>
</feature>
<feature type="splice variant" id="VSP_031518" description="In isoform 2 and isoform 4." evidence="32">
    <original>MAFETIVKKQVKKIREPCLKCVDMVISELISTVRQCTK</original>
    <variation>LAFEATVKKQVQKLKEPSIKCVDMVVSELTATIRKCSE</variation>
    <location>
        <begin position="407"/>
        <end position="444"/>
    </location>
</feature>
<feature type="splice variant" id="VSP_031519" description="In isoform 3 and isoform 4." evidence="31 32">
    <original>SRSGQASPSRPESPRPPFDL</original>
    <variation>RITISDP</variation>
    <location>
        <begin position="845"/>
        <end position="864"/>
    </location>
</feature>
<feature type="sequence variant" id="VAR_088263" description="In DEE31B." evidence="22">
    <location>
        <begin position="33"/>
        <end position="864"/>
    </location>
</feature>
<feature type="sequence variant" id="VAR_073710" description="In DEE31A; dbSNP:rs587777860." evidence="16">
    <original>A</original>
    <variation>P</variation>
    <location>
        <position position="177"/>
    </location>
</feature>
<feature type="sequence variant" id="VAR_073711" description="In DEE31A; dbSNP:rs587777861." evidence="16">
    <original>K</original>
    <variation>N</variation>
    <location>
        <position position="206"/>
    </location>
</feature>
<feature type="sequence variant" id="VAR_073712" description="In DEE31A; dbSNP:rs760270633." evidence="16 19">
    <original>R</original>
    <variation>W</variation>
    <location>
        <position position="237"/>
    </location>
</feature>
<feature type="sequence variant" id="VAR_088264" description="In DEE31B." evidence="22">
    <location>
        <begin position="284"/>
        <end position="864"/>
    </location>
</feature>
<feature type="sequence variant" id="VAR_073713" description="In DEE31A; dbSNP:rs587777862." evidence="16">
    <original>G</original>
    <variation>A</variation>
    <location>
        <position position="359"/>
    </location>
</feature>
<feature type="sequence variant" id="VAR_048904" description="In dbSNP:rs1042007." evidence="26">
    <original>D</original>
    <variation>N</variation>
    <location>
        <position position="744"/>
    </location>
</feature>
<feature type="mutagenesis site" description="Impairs assembly-stimulated GTPase activity. Does not affect basal GTPase activity. Does not affect membrane binding. Does not affect self-assembly. Completely inhibits receptor internalization." evidence="14">
    <original>Q</original>
    <variation>E</variation>
    <location>
        <position position="40"/>
    </location>
</feature>
<feature type="mutagenesis site" description="Impairs assembly-stimulated GTPase activity. Does not affect basal GTPase activity. Does not affect membrane binding. Does not affect self-assembly." evidence="14">
    <original>S</original>
    <variation>A</variation>
    <location>
        <position position="41"/>
    </location>
</feature>
<feature type="mutagenesis site" description="Inhibits receptor-mediated endocytosis. Significantly decreases endocytosis. Impairs receptor-mediated endocytosis. Impairs receptor-mediated endocytosis; when associated with 591-K--T-602. Does not affect self-assembly into rings and stacks." evidence="21 24 25 26">
    <original>K</original>
    <variation>A</variation>
    <location>
        <position position="44"/>
    </location>
</feature>
<feature type="mutagenesis site" description="Inhibits assembly-stimulated GTPase activity. Significantly increases basal GTPase activity Does not affect membrane binding. Does not affect self-assembly." evidence="14">
    <original>D</original>
    <variation>A</variation>
    <location>
        <position position="180"/>
    </location>
</feature>
<feature type="mutagenesis site" description="Does not significantly affect receptor-mediated endocytosis; when associated with A-291 and A-292." evidence="21">
    <original>R</original>
    <variation>A</variation>
    <location>
        <position position="290"/>
    </location>
</feature>
<feature type="mutagenesis site" description="Does not significantly affect receptor-mediated endocytosis; when associated with A-290 and A-292." evidence="21">
    <original>D</original>
    <variation>A</variation>
    <location>
        <position position="291"/>
    </location>
</feature>
<feature type="mutagenesis site" description="Does not significantly affect receptor-mediated endocytosis; when associated with A-290 and A-291." evidence="21">
    <original>T</original>
    <variation>A</variation>
    <location>
        <position position="292"/>
    </location>
</feature>
<feature type="mutagenesis site" description="Substantially reduces receptor-mediated endocytosis; whena ssociated with A-293 and A-294." evidence="21">
    <original>T</original>
    <variation>A</variation>
    <location>
        <position position="292"/>
    </location>
</feature>
<feature type="mutagenesis site" description="Substantially reduces receptor-mediated endocytosis; whena ssociated with A-292 and A-294." evidence="21">
    <original>L</original>
    <variation>A</variation>
    <location>
        <position position="293"/>
    </location>
</feature>
<feature type="mutagenesis site" description="Does not significantly affect receptor-mediated endocytosis. Substantially reduces receptor-mediated endocytosis; whena ssociated with A-292 and A-293." evidence="21">
    <original>P</original>
    <variation>A</variation>
    <location>
        <position position="294"/>
    </location>
</feature>
<feature type="mutagenesis site" description="Significantly decreases receptor-mediated endocytosis; when associated with R-334 and R-702." evidence="21">
    <original>L</original>
    <variation>R</variation>
    <location>
        <position position="330"/>
    </location>
</feature>
<feature type="mutagenesis site" description="Significantly decreases receptor-mediated endocytosis; when associated with R-330 and R-702." evidence="21">
    <original>Q</original>
    <variation>R</variation>
    <location>
        <position position="334"/>
    </location>
</feature>
<feature type="mutagenesis site" description="Significantly decreases receptor-mediated endocytosis; when associated with R-407 and W-488." evidence="21">
    <original>D</original>
    <variation>R</variation>
    <location>
        <position position="406"/>
    </location>
</feature>
<feature type="mutagenesis site" description="Significantly decreases receptor-mediated endocytosis; when associated with R-406 and W-488." evidence="21">
    <original>M</original>
    <variation>R</variation>
    <location>
        <position position="407"/>
    </location>
</feature>
<feature type="mutagenesis site" description="Significantly decreases receptor-mediated endocytosis; when associated with R-406 and W-407." evidence="21">
    <original>T</original>
    <variation>W</variation>
    <location>
        <position position="488"/>
    </location>
</feature>
<feature type="mutagenesis site" description="Abolishes 1-phosphatidyl-1D-myo-inositol 4,5-bisphosphate binding. Impairs receptor-mediated endocytosis. Impairs receptor-mediated endocytosis; when associated with A-44." evidence="25">
    <original>TEQRNVYKDYRQ</original>
    <variation>KDQRNT</variation>
    <location>
        <begin position="591"/>
        <end position="602"/>
    </location>
</feature>
<feature type="mutagenesis site" description="Significantly decreases endocytosis; when associated with R-330 and R-334." evidence="21">
    <original>L</original>
    <variation>R</variation>
    <location>
        <position position="702"/>
    </location>
</feature>
<feature type="mutagenesis site" description="Increases clathrin-mediated endocytosis (CME); when associated with A-778. Increases interaction with SNX9; when associated with A-778." evidence="20">
    <original>S</original>
    <variation>A</variation>
    <location>
        <position position="774"/>
    </location>
</feature>
<feature type="mutagenesis site" description="Increases clathrin-mediated endocytosis (CME); when associated with A-774. Increases interaction with SNX9; when associated with A-774." evidence="20">
    <original>S</original>
    <variation>A</variation>
    <location>
        <position position="778"/>
    </location>
</feature>
<feature type="sequence conflict" description="In Ref. 3; AAH50279." evidence="35" ref="3">
    <original>K</original>
    <variation>E</variation>
    <location>
        <position position="188"/>
    </location>
</feature>
<feature type="sequence conflict" description="In Ref. 3; AAH50279." evidence="35" ref="3">
    <original>N</original>
    <variation>D</variation>
    <location>
        <position position="287"/>
    </location>
</feature>
<feature type="sequence conflict" description="In Ref. 3; AAH50279." evidence="35" ref="3">
    <original>L</original>
    <variation>M</variation>
    <location>
        <position position="809"/>
    </location>
</feature>
<feature type="helix" evidence="46">
    <location>
        <begin position="9"/>
        <end position="21"/>
    </location>
</feature>
<feature type="turn" evidence="46">
    <location>
        <begin position="22"/>
        <end position="24"/>
    </location>
</feature>
<feature type="helix" evidence="46">
    <location>
        <begin position="27"/>
        <end position="29"/>
    </location>
</feature>
<feature type="strand" evidence="46">
    <location>
        <begin position="32"/>
        <end position="39"/>
    </location>
</feature>
<feature type="helix" evidence="46">
    <location>
        <begin position="44"/>
        <end position="52"/>
    </location>
</feature>
<feature type="strand" evidence="46">
    <location>
        <begin position="60"/>
        <end position="62"/>
    </location>
</feature>
<feature type="strand" evidence="46">
    <location>
        <begin position="69"/>
        <end position="75"/>
    </location>
</feature>
<feature type="strand" evidence="46">
    <location>
        <begin position="80"/>
        <end position="83"/>
    </location>
</feature>
<feature type="turn" evidence="47">
    <location>
        <begin position="85"/>
        <end position="88"/>
    </location>
</feature>
<feature type="helix" evidence="46">
    <location>
        <begin position="94"/>
        <end position="109"/>
    </location>
</feature>
<feature type="turn" evidence="46">
    <location>
        <begin position="110"/>
        <end position="113"/>
    </location>
</feature>
<feature type="strand" evidence="46">
    <location>
        <begin position="120"/>
        <end position="126"/>
    </location>
</feature>
<feature type="strand" evidence="46">
    <location>
        <begin position="131"/>
        <end position="136"/>
    </location>
</feature>
<feature type="helix" evidence="46">
    <location>
        <begin position="152"/>
        <end position="164"/>
    </location>
</feature>
<feature type="strand" evidence="46">
    <location>
        <begin position="169"/>
        <end position="176"/>
    </location>
</feature>
<feature type="helix" evidence="46">
    <location>
        <begin position="181"/>
        <end position="183"/>
    </location>
</feature>
<feature type="helix" evidence="46">
    <location>
        <begin position="185"/>
        <end position="193"/>
    </location>
</feature>
<feature type="strand" evidence="46">
    <location>
        <begin position="198"/>
        <end position="205"/>
    </location>
</feature>
<feature type="helix" evidence="46">
    <location>
        <begin position="207"/>
        <end position="209"/>
    </location>
</feature>
<feature type="helix" evidence="46">
    <location>
        <begin position="217"/>
        <end position="220"/>
    </location>
</feature>
<feature type="strand" evidence="46">
    <location>
        <begin position="231"/>
        <end position="233"/>
    </location>
</feature>
<feature type="helix" evidence="46">
    <location>
        <begin position="239"/>
        <end position="243"/>
    </location>
</feature>
<feature type="helix" evidence="46">
    <location>
        <begin position="248"/>
        <end position="261"/>
    </location>
</feature>
<feature type="turn" evidence="46">
    <location>
        <begin position="263"/>
        <end position="265"/>
    </location>
</feature>
<feature type="helix" evidence="46">
    <location>
        <begin position="266"/>
        <end position="271"/>
    </location>
</feature>
<feature type="helix" evidence="46">
    <location>
        <begin position="274"/>
        <end position="311"/>
    </location>
</feature>
<feature type="helix" evidence="45">
    <location>
        <begin position="312"/>
        <end position="316"/>
    </location>
</feature>
<feature type="helix" evidence="48">
    <location>
        <begin position="322"/>
        <end position="345"/>
    </location>
</feature>
<feature type="strand" evidence="48">
    <location>
        <begin position="353"/>
        <end position="355"/>
    </location>
</feature>
<feature type="helix" evidence="48">
    <location>
        <begin position="359"/>
        <end position="373"/>
    </location>
</feature>
<feature type="helix" evidence="48">
    <location>
        <begin position="381"/>
        <end position="396"/>
    </location>
</feature>
<feature type="helix" evidence="48">
    <location>
        <begin position="407"/>
        <end position="417"/>
    </location>
</feature>
<feature type="helix" evidence="48">
    <location>
        <begin position="418"/>
        <end position="420"/>
    </location>
</feature>
<feature type="helix" evidence="48">
    <location>
        <begin position="421"/>
        <end position="442"/>
    </location>
</feature>
<feature type="helix" evidence="48">
    <location>
        <begin position="443"/>
        <end position="446"/>
    </location>
</feature>
<feature type="turn" evidence="48">
    <location>
        <begin position="450"/>
        <end position="452"/>
    </location>
</feature>
<feature type="helix" evidence="48">
    <location>
        <begin position="453"/>
        <end position="466"/>
    </location>
</feature>
<feature type="helix" evidence="48">
    <location>
        <begin position="468"/>
        <end position="484"/>
    </location>
</feature>
<feature type="strand" evidence="48">
    <location>
        <begin position="489"/>
        <end position="492"/>
    </location>
</feature>
<feature type="strand" evidence="44">
    <location>
        <begin position="520"/>
        <end position="529"/>
    </location>
</feature>
<feature type="helix" evidence="44">
    <location>
        <begin position="533"/>
        <end position="535"/>
    </location>
</feature>
<feature type="strand" evidence="44">
    <location>
        <begin position="537"/>
        <end position="555"/>
    </location>
</feature>
<feature type="strand" evidence="44">
    <location>
        <begin position="561"/>
        <end position="566"/>
    </location>
</feature>
<feature type="strand" evidence="44">
    <location>
        <begin position="570"/>
        <end position="574"/>
    </location>
</feature>
<feature type="strand" evidence="44">
    <location>
        <begin position="579"/>
        <end position="582"/>
    </location>
</feature>
<feature type="strand" evidence="44">
    <location>
        <begin position="584"/>
        <end position="590"/>
    </location>
</feature>
<feature type="strand" evidence="48">
    <location>
        <begin position="591"/>
        <end position="594"/>
    </location>
</feature>
<feature type="strand" evidence="44">
    <location>
        <begin position="601"/>
        <end position="609"/>
    </location>
</feature>
<feature type="helix" evidence="44">
    <location>
        <begin position="610"/>
        <end position="622"/>
    </location>
</feature>
<feature type="helix" evidence="48">
    <location>
        <begin position="655"/>
        <end position="688"/>
    </location>
</feature>
<feature type="helix" evidence="48">
    <location>
        <begin position="690"/>
        <end position="699"/>
    </location>
</feature>
<feature type="helix" evidence="48">
    <location>
        <begin position="701"/>
        <end position="707"/>
    </location>
</feature>
<feature type="helix" evidence="48">
    <location>
        <begin position="711"/>
        <end position="714"/>
    </location>
</feature>
<feature type="helix" evidence="46">
    <location>
        <begin position="726"/>
        <end position="742"/>
    </location>
</feature>
<proteinExistence type="evidence at protein level"/>
<reference key="1">
    <citation type="journal article" date="1993" name="J. Cell Biol.">
        <title>Mutations in human dynamin block an intermediate stage in coated vesicle formation.</title>
        <authorList>
            <person name="van der Bliek A.M."/>
            <person name="Redelmeier T.E."/>
            <person name="Tisdale E.J."/>
            <person name="Meyerowitz E.M."/>
            <person name="Schmid S.L."/>
        </authorList>
    </citation>
    <scope>NUCLEOTIDE SEQUENCE [MRNA] (ISOFORM 1)</scope>
    <scope>NUCLEOTIDE SEQUENCE [MRNA] OF 387-466 (ISOFORM 2)</scope>
    <scope>NUCLEOTIDE SEQUENCE [MRNA] OF 726-856 (ISOFORM 3)</scope>
    <scope>FUNCTION</scope>
    <scope>SUBCELLULAR LOCATION</scope>
    <scope>MUTAGENESIS OF LYS-44</scope>
    <scope>VARIANT ASN-744</scope>
</reference>
<reference key="2">
    <citation type="journal article" date="2004" name="Nature">
        <title>DNA sequence and analysis of human chromosome 9.</title>
        <authorList>
            <person name="Humphray S.J."/>
            <person name="Oliver K."/>
            <person name="Hunt A.R."/>
            <person name="Plumb R.W."/>
            <person name="Loveland J.E."/>
            <person name="Howe K.L."/>
            <person name="Andrews T.D."/>
            <person name="Searle S."/>
            <person name="Hunt S.E."/>
            <person name="Scott C.E."/>
            <person name="Jones M.C."/>
            <person name="Ainscough R."/>
            <person name="Almeida J.P."/>
            <person name="Ambrose K.D."/>
            <person name="Ashwell R.I.S."/>
            <person name="Babbage A.K."/>
            <person name="Babbage S."/>
            <person name="Bagguley C.L."/>
            <person name="Bailey J."/>
            <person name="Banerjee R."/>
            <person name="Barker D.J."/>
            <person name="Barlow K.F."/>
            <person name="Bates K."/>
            <person name="Beasley H."/>
            <person name="Beasley O."/>
            <person name="Bird C.P."/>
            <person name="Bray-Allen S."/>
            <person name="Brown A.J."/>
            <person name="Brown J.Y."/>
            <person name="Burford D."/>
            <person name="Burrill W."/>
            <person name="Burton J."/>
            <person name="Carder C."/>
            <person name="Carter N.P."/>
            <person name="Chapman J.C."/>
            <person name="Chen Y."/>
            <person name="Clarke G."/>
            <person name="Clark S.Y."/>
            <person name="Clee C.M."/>
            <person name="Clegg S."/>
            <person name="Collier R.E."/>
            <person name="Corby N."/>
            <person name="Crosier M."/>
            <person name="Cummings A.T."/>
            <person name="Davies J."/>
            <person name="Dhami P."/>
            <person name="Dunn M."/>
            <person name="Dutta I."/>
            <person name="Dyer L.W."/>
            <person name="Earthrowl M.E."/>
            <person name="Faulkner L."/>
            <person name="Fleming C.J."/>
            <person name="Frankish A."/>
            <person name="Frankland J.A."/>
            <person name="French L."/>
            <person name="Fricker D.G."/>
            <person name="Garner P."/>
            <person name="Garnett J."/>
            <person name="Ghori J."/>
            <person name="Gilbert J.G.R."/>
            <person name="Glison C."/>
            <person name="Grafham D.V."/>
            <person name="Gribble S."/>
            <person name="Griffiths C."/>
            <person name="Griffiths-Jones S."/>
            <person name="Grocock R."/>
            <person name="Guy J."/>
            <person name="Hall R.E."/>
            <person name="Hammond S."/>
            <person name="Harley J.L."/>
            <person name="Harrison E.S.I."/>
            <person name="Hart E.A."/>
            <person name="Heath P.D."/>
            <person name="Henderson C.D."/>
            <person name="Hopkins B.L."/>
            <person name="Howard P.J."/>
            <person name="Howden P.J."/>
            <person name="Huckle E."/>
            <person name="Johnson C."/>
            <person name="Johnson D."/>
            <person name="Joy A.A."/>
            <person name="Kay M."/>
            <person name="Keenan S."/>
            <person name="Kershaw J.K."/>
            <person name="Kimberley A.M."/>
            <person name="King A."/>
            <person name="Knights A."/>
            <person name="Laird G.K."/>
            <person name="Langford C."/>
            <person name="Lawlor S."/>
            <person name="Leongamornlert D.A."/>
            <person name="Leversha M."/>
            <person name="Lloyd C."/>
            <person name="Lloyd D.M."/>
            <person name="Lovell J."/>
            <person name="Martin S."/>
            <person name="Mashreghi-Mohammadi M."/>
            <person name="Matthews L."/>
            <person name="McLaren S."/>
            <person name="McLay K.E."/>
            <person name="McMurray A."/>
            <person name="Milne S."/>
            <person name="Nickerson T."/>
            <person name="Nisbett J."/>
            <person name="Nordsiek G."/>
            <person name="Pearce A.V."/>
            <person name="Peck A.I."/>
            <person name="Porter K.M."/>
            <person name="Pandian R."/>
            <person name="Pelan S."/>
            <person name="Phillimore B."/>
            <person name="Povey S."/>
            <person name="Ramsey Y."/>
            <person name="Rand V."/>
            <person name="Scharfe M."/>
            <person name="Sehra H.K."/>
            <person name="Shownkeen R."/>
            <person name="Sims S.K."/>
            <person name="Skuce C.D."/>
            <person name="Smith M."/>
            <person name="Steward C.A."/>
            <person name="Swarbreck D."/>
            <person name="Sycamore N."/>
            <person name="Tester J."/>
            <person name="Thorpe A."/>
            <person name="Tracey A."/>
            <person name="Tromans A."/>
            <person name="Thomas D.W."/>
            <person name="Wall M."/>
            <person name="Wallis J.M."/>
            <person name="West A.P."/>
            <person name="Whitehead S.L."/>
            <person name="Willey D.L."/>
            <person name="Williams S.A."/>
            <person name="Wilming L."/>
            <person name="Wray P.W."/>
            <person name="Young L."/>
            <person name="Ashurst J.L."/>
            <person name="Coulson A."/>
            <person name="Blocker H."/>
            <person name="Durbin R.M."/>
            <person name="Sulston J.E."/>
            <person name="Hubbard T."/>
            <person name="Jackson M.J."/>
            <person name="Bentley D.R."/>
            <person name="Beck S."/>
            <person name="Rogers J."/>
            <person name="Dunham I."/>
        </authorList>
    </citation>
    <scope>NUCLEOTIDE SEQUENCE [LARGE SCALE GENOMIC DNA]</scope>
</reference>
<reference key="3">
    <citation type="journal article" date="2004" name="Genome Res.">
        <title>The status, quality, and expansion of the NIH full-length cDNA project: the Mammalian Gene Collection (MGC).</title>
        <authorList>
            <consortium name="The MGC Project Team"/>
        </authorList>
    </citation>
    <scope>NUCLEOTIDE SEQUENCE [LARGE SCALE MRNA] (ISOFORM 3)</scope>
    <source>
        <tissue>Brain</tissue>
        <tissue>PNS</tissue>
    </source>
</reference>
<reference key="4">
    <citation type="journal article" date="1995" name="Nature">
        <title>Dynamin self-assembles into rings suggesting a mechanism for coated vesicle budding.</title>
        <authorList>
            <person name="Hinshaw J.E."/>
            <person name="Schmid S.L."/>
        </authorList>
    </citation>
    <scope>FUNCTION</scope>
    <scope>SUBUNIT</scope>
    <scope>DOMAIN</scope>
    <scope>MUTAGENESIS OF LYS-44</scope>
</reference>
<reference key="5">
    <citation type="journal article" date="1996" name="J. Biol. Chem.">
        <title>Regulation of dynamin I GTPase activity by G protein betagamma subunits and phosphatidylinositol 4,5-bisphosphate.</title>
        <authorList>
            <person name="Lin H.C."/>
            <person name="Gilman A.G."/>
        </authorList>
    </citation>
    <scope>FUNCTION</scope>
    <scope>CATALYTIC ACTIVITY</scope>
    <scope>ACTIVITY REGULATION</scope>
</reference>
<reference key="6">
    <citation type="journal article" date="1997" name="EMBO J.">
        <title>Domain structure and intramolecular regulation of dynamin GTPase.</title>
        <authorList>
            <person name="Muhlberg A.B."/>
            <person name="Warnock D.E."/>
            <person name="Schmid S.L."/>
        </authorList>
    </citation>
    <scope>FUNCTION</scope>
    <scope>CATALYTIC ACTIVITY</scope>
    <scope>SUBUNIT</scope>
    <scope>DOMAIN</scope>
</reference>
<reference key="7">
    <citation type="journal article" date="1998" name="Biochemistry">
        <title>Dual function C-terminal domain of dynamin-1: modulation of self-assembly by interaction of the assembly site with SH3 domains.</title>
        <authorList>
            <person name="Scaife R."/>
            <person name="Venien-Bryan C."/>
            <person name="Margolis R.L."/>
        </authorList>
    </citation>
    <scope>FUNCTION</scope>
    <scope>DOMAIN</scope>
    <scope>INTERACTION WITH GRB2</scope>
</reference>
<reference key="8">
    <citation type="journal article" date="1998" name="J. Biol. Chem.">
        <title>The pleckstrin homology domains of dynamin isoforms require oligomerization for high affinity phosphoinositide binding.</title>
        <authorList>
            <person name="Klein D.E."/>
            <person name="Lee A."/>
            <person name="Frank D.W."/>
            <person name="Marks M.S."/>
            <person name="Lemmon M.A."/>
        </authorList>
    </citation>
    <scope>SUBUNIT</scope>
    <scope>DOMAIN</scope>
</reference>
<reference key="9">
    <citation type="journal article" date="1999" name="Curr. Biol.">
        <title>Dominant-negative inhibition of receptor-mediated endocytosis by a dynamin-1 mutant with a defective pleckstrin homology domain.</title>
        <authorList>
            <person name="Lee A."/>
            <person name="Frank D.W."/>
            <person name="Marks M.S."/>
            <person name="Lemmon M.A."/>
        </authorList>
    </citation>
    <scope>DOMAIN</scope>
    <scope>FUNCTION</scope>
</reference>
<reference key="10">
    <citation type="journal article" date="2002" name="Nat. Cell Biol.">
        <title>Imaging actin and dynamin recruitment during invagination of single clathrin-coated pits.</title>
        <authorList>
            <person name="Merrifield C.J."/>
            <person name="Feldman M.E."/>
            <person name="Wan L."/>
            <person name="Almers W."/>
        </authorList>
    </citation>
    <scope>SUBCELLULAR LOCATION</scope>
</reference>
<reference key="11">
    <citation type="journal article" date="2003" name="Dev. Cell">
        <title>Auxilin-dynamin interactions link the uncoating ATPase chaperone machinery with vesicle formation.</title>
        <authorList>
            <person name="Newmyer S.L."/>
            <person name="Christensen A."/>
            <person name="Sever S."/>
        </authorList>
    </citation>
    <scope>FUNCTION</scope>
    <scope>INTERACTION WITH DNAJC6</scope>
</reference>
<reference key="12">
    <citation type="journal article" date="2005" name="Mol. Biol. Cell">
        <title>SNX9 regulates dynamin assembly and is required for efficient clathrin-mediated endocytosis.</title>
        <authorList>
            <person name="Soulet F."/>
            <person name="Yarar D."/>
            <person name="Leonard M."/>
            <person name="Schmid S.L."/>
        </authorList>
    </citation>
    <scope>SUBCELLULAR LOCATION</scope>
    <scope>INTERACTION WITH SNX9</scope>
    <scope>FUNCTION</scope>
    <scope>CATALYTIC ACTIVITY</scope>
</reference>
<reference key="13">
    <citation type="journal article" date="2006" name="Cell">
        <title>Global, in vivo, and site-specific phosphorylation dynamics in signaling networks.</title>
        <authorList>
            <person name="Olsen J.V."/>
            <person name="Blagoev B."/>
            <person name="Gnad F."/>
            <person name="Macek B."/>
            <person name="Kumar C."/>
            <person name="Mortensen P."/>
            <person name="Mann M."/>
        </authorList>
    </citation>
    <scope>IDENTIFICATION BY MASS SPECTROMETRY [LARGE SCALE ANALYSIS]</scope>
    <source>
        <tissue>Cervix carcinoma</tissue>
    </source>
</reference>
<reference key="14">
    <citation type="journal article" date="2007" name="FEBS Lett.">
        <title>Myosin 1E interacts with synaptojanin-1 and dynamin and is involved in endocytosis.</title>
        <authorList>
            <person name="Krendel M."/>
            <person name="Osterweil E.K."/>
            <person name="Mooseker M.S."/>
        </authorList>
    </citation>
    <scope>INTERACTION WITH MYO1E</scope>
</reference>
<reference key="15">
    <citation type="journal article" date="2008" name="Cell">
        <title>GTPase cycle of dynamin is coupled to membrane squeeze and release, leading to spontaneous fission.</title>
        <authorList>
            <person name="Bashkirov P.V."/>
            <person name="Akimov S.A."/>
            <person name="Evseev A.I."/>
            <person name="Schmid S.L."/>
            <person name="Zimmerberg J."/>
            <person name="Frolov V.A."/>
        </authorList>
    </citation>
    <scope>FUNCTION</scope>
</reference>
<reference key="16">
    <citation type="journal article" date="2008" name="J. Biol. Chem.">
        <title>A novel sorting nexin modulates endocytic trafficking and alpha-secretase cleavage of the amyloid precursor protein.</title>
        <authorList>
            <person name="Schobel S."/>
            <person name="Neumann S."/>
            <person name="Hertweck M."/>
            <person name="Dislich B."/>
            <person name="Kuhn P.H."/>
            <person name="Kremmer E."/>
            <person name="Seed B."/>
            <person name="Baumeister R."/>
            <person name="Haass C."/>
            <person name="Lichtenthaler S.F."/>
        </authorList>
    </citation>
    <scope>INTERACTION WITH SNX33</scope>
</reference>
<reference key="17">
    <citation type="journal article" date="2008" name="J. Proteome Res.">
        <title>Phosphoproteome of resting human platelets.</title>
        <authorList>
            <person name="Zahedi R.P."/>
            <person name="Lewandrowski U."/>
            <person name="Wiesner J."/>
            <person name="Wortelkamp S."/>
            <person name="Moebius J."/>
            <person name="Schuetz C."/>
            <person name="Walter U."/>
            <person name="Gambaryan S."/>
            <person name="Sickmann A."/>
        </authorList>
    </citation>
    <scope>IDENTIFICATION BY MASS SPECTROMETRY [LARGE SCALE ANALYSIS]</scope>
    <source>
        <tissue>Platelet</tissue>
    </source>
</reference>
<reference key="18">
    <citation type="journal article" date="2011" name="BMC Syst. Biol.">
        <title>Initial characterization of the human central proteome.</title>
        <authorList>
            <person name="Burkard T.R."/>
            <person name="Planyavsky M."/>
            <person name="Kaupe I."/>
            <person name="Breitwieser F.P."/>
            <person name="Buerckstuemmer T."/>
            <person name="Bennett K.L."/>
            <person name="Superti-Furga G."/>
            <person name="Colinge J."/>
        </authorList>
    </citation>
    <scope>IDENTIFICATION BY MASS SPECTROMETRY [LARGE SCALE ANALYSIS]</scope>
</reference>
<reference key="19">
    <citation type="journal article" date="2013" name="Mol. Biol. Cell">
        <title>cAMP-stimulated phosphorylation of diaphanous 1 regulates protein stability and interaction with binding partners in adrenocortical cells.</title>
        <authorList>
            <person name="Li D."/>
            <person name="Dammer E.B."/>
            <person name="Lucki N.C."/>
            <person name="Sewer M.B."/>
        </authorList>
    </citation>
    <scope>INTERACTION WITH DIAPH1</scope>
    <scope>IDENTIFICATION BY MASS SPECTROMETRY</scope>
</reference>
<reference key="20">
    <citation type="journal article" date="2018" name="PLoS Biol.">
        <title>A noncanonical role for dynamin-1 in regulating early stages of clathrin-mediated endocytosis in non-neuronal cells.</title>
        <authorList>
            <person name="Srinivasan S."/>
            <person name="Burckhardt C.J."/>
            <person name="Bhave M."/>
            <person name="Chen Z."/>
            <person name="Chen P.H."/>
            <person name="Wang X."/>
            <person name="Danuser G."/>
            <person name="Schmid S.L."/>
        </authorList>
    </citation>
    <scope>FUNCTION</scope>
    <scope>PHOSPHORYLATION AT SER-774</scope>
    <scope>MUTAGENESIS OF SER-774 AND SER-778</scope>
    <scope>INTERACTION WITH SNX9</scope>
</reference>
<reference key="21">
    <citation type="journal article" date="2014" name="Am. J. Hum. Genet.">
        <title>De novo mutations in synaptic transmission genes including DNM1 cause epileptic encephalopathies.</title>
        <authorList>
            <consortium name="EuroEPINOMICS-RES Consortium"/>
            <person name="Appenzeller S."/>
            <person name="Balling R."/>
            <person name="Barisic N."/>
            <person name="Baulac S."/>
            <person name="Caglayan H."/>
            <person name="Craiu D."/>
            <person name="De Jonghe P."/>
            <person name="Depienne C."/>
            <person name="Dimova P."/>
            <person name="Djemie T."/>
            <person name="Gormley P."/>
            <person name="Guerrini R."/>
            <person name="Helbig I."/>
            <person name="Hjalgrim H."/>
            <person name="Hoffman-Zacharska D."/>
            <person name="Jahn J."/>
            <person name="Klein K.M."/>
            <person name="Koeleman B."/>
            <person name="Komarek V."/>
            <person name="Krause R."/>
            <person name="Kuhlenbaumer G."/>
            <person name="Leguern E."/>
            <person name="Lehesjoki A.E."/>
            <person name="Lemke J.R."/>
            <person name="Lerche H."/>
            <person name="Linnankivi T."/>
            <person name="Marini C."/>
            <person name="May P."/>
            <person name="Moller R.S."/>
            <person name="Muhle H."/>
            <person name="Pal D."/>
            <person name="Palotie A."/>
            <person name="Pendziwiat M."/>
            <person name="Robbiano A."/>
            <person name="Roelens F."/>
            <person name="Rosenow F."/>
            <person name="Selmer K."/>
            <person name="Serratosa J.M."/>
            <person name="Sisodiya S."/>
            <person name="Stephani U."/>
            <person name="Sterbova K."/>
            <person name="Striano P."/>
            <person name="Suls A."/>
            <person name="Talvik T."/>
            <person name="von Spiczak S."/>
            <person name="Weber Y."/>
            <person name="Weckhuysen S."/>
            <person name="Zara F."/>
            <person name="Abou-Khalil B."/>
            <person name="Alldredge B.K."/>
            <person name="Andermann E."/>
            <person name="Andermann F."/>
            <person name="Amron D."/>
            <person name="Bautista J.F."/>
            <person name="Berkovic S.F."/>
            <person name="Bluvstein J."/>
            <person name="Boro A."/>
            <person name="Cascino G."/>
            <person name="Consalvo D."/>
            <person name="Crumrine P."/>
            <person name="Devinsky O."/>
            <person name="Dlugos D."/>
            <person name="Epstein M.P."/>
            <person name="Fiol M."/>
            <person name="Fountain N.B."/>
            <person name="French J."/>
            <person name="Friedman D."/>
            <person name="Geller E.B."/>
            <person name="Glauser T."/>
            <person name="Glynn S."/>
            <person name="Haas K."/>
            <person name="Haut S.R."/>
            <person name="Hayward J."/>
            <person name="Helmers S.L."/>
            <person name="Joshi S."/>
            <person name="Kanner A."/>
            <person name="Kirsch H.E."/>
            <person name="Knowlton R.C."/>
            <person name="Kossoff E.H."/>
            <person name="Kuperman R."/>
            <person name="Kuzniecky R."/>
            <person name="Lowenstein D.H."/>
            <person name="McGuire S.M."/>
            <person name="Motika P.V."/>
            <person name="Novotny E.J."/>
            <person name="Ottman R."/>
            <person name="Paolicchi J.M."/>
            <person name="Parent J."/>
            <person name="Park K."/>
            <person name="Poduri A."/>
            <person name="Sadleir L."/>
            <person name="Scheffer I.E."/>
            <person name="Shellhaas R.A."/>
            <person name="Sherr E."/>
            <person name="Shih J.J."/>
            <person name="Singh R."/>
            <person name="Sirven J."/>
            <person name="Smith M.C."/>
            <person name="Sullivan J."/>
            <person name="Thio L.L."/>
            <person name="Venkat A."/>
            <person name="Vining E.P."/>
            <person name="Von Allmen G.K."/>
            <person name="Weisenberg J.L."/>
            <person name="Widdess-Walsh P."/>
            <person name="Winawer M.R."/>
            <person name="Allen A.S."/>
            <person name="Berkovic S.F."/>
            <person name="Cossette P."/>
            <person name="Delanty N."/>
            <person name="Dlugos D."/>
            <person name="Eichler E.E."/>
            <person name="Epstein M.P."/>
            <person name="Glauser T."/>
            <person name="Goldstein D.B."/>
            <person name="Han Y."/>
            <person name="Heinzen E.L."/>
            <person name="Johnson M.R."/>
            <person name="Kuzniecky R."/>
            <person name="Lowenstein D.H."/>
            <person name="Marson A.G."/>
            <person name="Mefford H.C."/>
            <person name="Nieh S.E."/>
            <person name="O'Brien T.J."/>
            <person name="Ottman R."/>
            <person name="Petrou S."/>
            <person name="Petrovski S."/>
            <person name="Poduri A."/>
            <person name="Ruzzo E.K."/>
            <person name="Scheffer I.E."/>
            <person name="Sherr E."/>
        </authorList>
    </citation>
    <scope>INVOLVEMENT IN DEE31A</scope>
    <scope>VARIANTS DEE31A PRO-177; ASN-206; TRP-237 AND ALA-359</scope>
</reference>
<reference key="22">
    <citation type="journal article" date="2015" name="Nature">
        <title>Large-scale discovery of novel genetic causes of developmental disorders.</title>
        <authorList>
            <consortium name="Deciphering Developmental Disorders Study"/>
        </authorList>
    </citation>
    <scope>INVOLVEMENT IN DEE31A</scope>
</reference>
<reference key="23">
    <citation type="journal article" date="1994" name="Curr. Biol.">
        <title>Three-dimensional solution structure of the pleckstrin homology domain from dynamin.</title>
        <authorList>
            <person name="Downing A.K."/>
            <person name="Driscoll P.C."/>
            <person name="Gout I."/>
            <person name="Salim K."/>
            <person name="Zvelebil M.J."/>
            <person name="Waterfield M.D."/>
        </authorList>
    </citation>
    <scope>STRUCTURE BY NMR OF 511-630</scope>
</reference>
<reference evidence="37" key="24">
    <citation type="journal article" date="1994" name="Cell">
        <title>Crystal structure at 2.2-A resolution of the pleckstrin homology domain from human dynamin.</title>
        <authorList>
            <person name="Ferguson K.M."/>
            <person name="Lemmon M.A."/>
            <person name="Schlessinger J."/>
            <person name="Sigler P.B."/>
        </authorList>
    </citation>
    <scope>X-RAY CRYSTALLOGRAPHY (2.2 ANGSTROMS) OF 509-633</scope>
    <scope>MUTAGENESIS OF LYS-44 AND 591-THR--GLN-602</scope>
</reference>
<reference evidence="38" key="25">
    <citation type="journal article" date="1994" name="Nat. Struct. Biol.">
        <title>Crystal structure of the pleckstrin homology domain from dynamin.</title>
        <authorList>
            <person name="Timm D."/>
            <person name="Salim K."/>
            <person name="Gout I."/>
            <person name="Guruprasad L."/>
            <person name="Waterfield M."/>
            <person name="Blundell T."/>
        </authorList>
    </citation>
    <scope>X-RAY CRYSTALLOGRAPHY (2.3 ANGSTROMS) OF 509-630</scope>
</reference>
<reference evidence="39 40" key="26">
    <citation type="journal article" date="2010" name="Nature">
        <title>G domain dimerization controls dynamin's assembly-stimulated GTPase activity.</title>
        <authorList>
            <person name="Chappie J.S."/>
            <person name="Acharya S."/>
            <person name="Leonard M."/>
            <person name="Schmid S.L."/>
            <person name="Dyda F."/>
        </authorList>
    </citation>
    <scope>X-RAY CRYSTALLOGRAPHY (2.00 ANGSTROMS) OF 6-320 IN COMPLEX WITH GDP</scope>
    <scope>FUNCTION</scope>
    <scope>CATALYTIC ACTIVITY</scope>
    <scope>SUBUNIT</scope>
    <scope>MUTAGENESIS OF GLN-40; SER-41 AND ASP-180</scope>
</reference>
<reference evidence="41" key="27">
    <citation type="journal article" date="2016" name="Biochem. Biophys. Res. Commun.">
        <title>Crystal structure of the GTPase domain and the bundle signalling element of dynamin in the GDP state.</title>
        <authorList>
            <person name="Anand R."/>
            <person name="Eschenburg S."/>
            <person name="Reubold T.F."/>
        </authorList>
    </citation>
    <scope>X-RAY CRYSTALLOGRAPHY (1.70 ANGSTROMS) OF 5-320 IN COMPLEX WITH GDP</scope>
</reference>
<reference evidence="42 43" key="28">
    <citation type="journal article" date="2018" name="Nature">
        <title>Cryo-EM of the dynamin polymer assembled on lipid membrane.</title>
        <authorList>
            <person name="Kong L."/>
            <person name="Sochacki K.A."/>
            <person name="Wang H."/>
            <person name="Fang S."/>
            <person name="Canagarajah B."/>
            <person name="Kehr A.D."/>
            <person name="Rice W.J."/>
            <person name="Strub M.P."/>
            <person name="Taraska J.W."/>
            <person name="Hinshaw J.E."/>
        </authorList>
    </citation>
    <scope>STRUCTURE BY ELECTRON MICROSCOPY (3.75 ANGSTROMS) OF 1-748 IN COMPLEX WITH GTP ANALOG</scope>
    <scope>FUNCTION</scope>
    <scope>SUBCELLULAR LOCATION</scope>
    <scope>MUTAGENESIS OF LYS-44; ARG-290; ASP-291; THR-292; LEU-293; PRO-294; LEU-330; GLN-334; ASP-406; MET-407; THR-488 AND LEU-702</scope>
    <scope>SUBUNIT</scope>
</reference>
<reference key="29">
    <citation type="journal article" date="2016" name="Am. J. Hum. Genet.">
        <title>De novo mutations in SLC1A2 and CACNA1A are important causes of epileptic encephalopathies.</title>
        <authorList>
            <consortium name="Epi4K Consortium"/>
        </authorList>
    </citation>
    <scope>VARIANT DEE31A TRP-237</scope>
</reference>
<reference key="30">
    <citation type="journal article" date="2022" name="Genes (Basel)">
        <title>Clinical, Radiological, and Genetic Characterization of a Patient with a Novel Homoallelic Loss-of-Function Variant in DNM1.</title>
        <authorList>
            <person name="AlTassan R."/>
            <person name="AlQudairy H."/>
            <person name="Alromayan R."/>
            <person name="Alfalah A."/>
            <person name="AlHarbi O.A."/>
            <person name="Gonzalez-Alvarez A.C."/>
            <person name="Arold S.T."/>
            <person name="Kaya N."/>
        </authorList>
    </citation>
    <scope>INVOLVEMENT IN DEE31B</scope>
</reference>
<reference key="31">
    <citation type="journal article" date="2022" name="J. Med. Genet.">
        <title>Loss-of-function variants in DNM1 cause a specific form of developmental and epileptic encephalopathy only in biallelic state.</title>
        <authorList>
            <person name="Yigit G."/>
            <person name="Sheffer R."/>
            <person name="Daana M."/>
            <person name="Li Y."/>
            <person name="Kaygusuz E."/>
            <person name="Mor-Shakad H."/>
            <person name="Altmueller J."/>
            <person name="Nuernberg P."/>
            <person name="Douiev L."/>
            <person name="Kaulfuss S."/>
            <person name="Burfeind P."/>
            <person name="Wollnik B."/>
            <person name="Brockmann K."/>
        </authorList>
    </citation>
    <scope>VARIANTS DEE31B 33-GLN--LEU-864 DEL AND 284-GLN--LEU-864 DEL</scope>
</reference>
<name>DYN1_HUMAN</name>
<comment type="function">
    <text evidence="2 3 9 10 13 14 20 21 24 26 27 28 30">Catalyzes the hydrolysis of GTP and utilizes this energy to mediate vesicle scission and participates in many forms of endocytosis, such as clathrin-mediated endocytosis or synaptic vesicle endocytosis as well as rapid endocytosis (RE) (PubMed:15703209, PubMed:20428113, PubMed:29668686, PubMed:8101525, PubMed:8910402, PubMed:9362482). Associates to the membrane, through lipid binding, and self-assembles into rings and stacks of interconnected rings through oligomerization to form a helical polymer around the vesicle membrane leading to constriction of invaginated coated pits around their necks (PubMed:30069048, PubMed:7877694, PubMed:9922133). Self-assembly of the helical polymer induces membrane tubules narrowing until the polymer reaches a length sufficient to trigger GTP hydrolysis (PubMed:19084269). Depending on the curvature imposed on the tubules, membrane detachment from the helical polymer upon GTP hydrolysis can cause spontaneous hemifission followed by complete fission (PubMed:19084269). May play a role in regulating early stages of clathrin-mediated endocytosis in non-neuronal cells through its activation by dephosphorylation via the signaling downstream of EGFR (PubMed:29668686). Controls vesicle size at a step before fission, during formation of membrane pits, at hippocampal synapses (By similarity). Controls plastic adaptation of the synaptic vesicle recycling machinery to high levels of activity (By similarity). Mediates rapid endocytosis (RE), a Ca(2+)-dependent and clathrin- and K(+)-independent process in chromaffin cells (By similarity). Microtubule-associated force-producing protein involved in producing microtubule bundles and able to bind and hydrolyze GTP (By similarity). Through its interaction with DNAJC6, acts during the early steps of clathrin-coated vesicle (CCV) formation (PubMed:12791276).</text>
</comment>
<comment type="catalytic activity">
    <reaction evidence="10 14 27 28">
        <text>GTP + H2O = GDP + phosphate + H(+)</text>
        <dbReference type="Rhea" id="RHEA:19669"/>
        <dbReference type="ChEBI" id="CHEBI:15377"/>
        <dbReference type="ChEBI" id="CHEBI:15378"/>
        <dbReference type="ChEBI" id="CHEBI:37565"/>
        <dbReference type="ChEBI" id="CHEBI:43474"/>
        <dbReference type="ChEBI" id="CHEBI:58189"/>
        <dbReference type="EC" id="3.6.5.5"/>
    </reaction>
    <physiologicalReaction direction="left-to-right" evidence="10 14 27 28">
        <dbReference type="Rhea" id="RHEA:19670"/>
    </physiologicalReaction>
</comment>
<comment type="activity regulation">
    <text evidence="27">GTPase activity is activated by 1-phosphatidyl-1D-myo-inositol 4,5-bisphosphate (PubMed:8910402). GTPase activity is inhibited by the heterodimer G protein formed by GNB1 and GNG2 with an IC(50)=400 nM when DNM1 concentration is 5 nM (PubMed:8910402).</text>
</comment>
<comment type="subunit">
    <text evidence="1 2 9 10 11 12 14 15 18 20 21 24 28 29 30">Homodimer; homodimerization is mediated by the dynamin-type G domain which promotes assembly-stimulated GTPase activity (PubMed:20428113, PubMed:26612256). Homo-tetramer formed from two dimers in the absence of lipid (PubMed:30069048, PubMed:9362482). Oligomerizes into a helical polymer that self-assembles around the vesicle membrane, when associated to the menbrane through lipid binding (PubMed:30069048, PubMed:7877694, PubMed:9765310). Interacts (via C-terminal proline-rich domain (PRD)) with SNX9 (via SH3 domain); this interaction allows regulation of DNM1 self-assembly during late stages of endocytic vesicle formation and supports DNM1's early functions in accelerating clathrin-coated pits (CCPs) maturation in non neuronals cell (PubMed:15703209, PubMed:29668686). Interacts (via C-terminal proline-rich domain (PRD)) with MYO1E (via SH3 domain); this interaction regulates receptor-mediated endocytosis (PubMed:17257598). Interacts with SNX33 (via SH3 domain); this interaction decreases DNM1-dependent endocytosis (PubMed:18353773). Interacts with DIAPH1 (PubMed:23325789). Interacts with GRB2 (via SH3 domain); this interaction mediates disassembly of DNM1 polymers, therefore modulates self-assembly (PubMed:9922133). Forms a complex with BIN1 (via SH3 domain) and SH3GL2 (via SH3 domain). Forms a complex with SH3GL2 (via SH3 domain) and AMPH (via SH3 domain). Forms a complex with SH3GL2 (via SH3 domain) and SYNJ1. Interacts with AMPH. Interacts (via C-terminal proline-rich domain (PRD)) with SYT1; this interaction facilitates vesicle fission during clathrin-mediated endocytosis (CME). Interacts (via C-terminal proline-rich domain (PRD)) with PLCG1 (via SH3 domain); this interaction stimulates the release of GDP from DNM1 and enhances DNM1-dependent endocytosis. Interacts with SNPH; this interaction inhibits the binding of DNM1 to AMPH and DNM1-receptor-mediated endocytosis (By similarity). Interacts with CAV1. Interacts with SH3GLB1 (via SH3 domain). Interacts with PACSIN1 (via SH3 domain), PACSIN2 (via SH3 domain) and PACSIN3 (via SH3 domain). Interacts with UNC119; this interaction decreases DNM1's GTPase activity and affects DNM1's interaction with AMPH (By similarity). Interacts (GTP-bound form) with DNAJC6; this interaction allows clathrin-coated vesicle (CCV) formation at the plasma membrane (PubMed:12791276).</text>
</comment>
<comment type="interaction">
    <interactant intactId="EBI-713135">
        <id>Q05193</id>
    </interactant>
    <interactant intactId="EBI-713135">
        <id>Q05193</id>
        <label>DNM1</label>
    </interactant>
    <organismsDiffer>false</organismsDiffer>
    <experiments>13</experiments>
</comment>
<comment type="interaction">
    <interactant intactId="EBI-713135">
        <id>Q05193</id>
    </interactant>
    <interactant intactId="EBI-346547">
        <id>P50570</id>
        <label>DNM2</label>
    </interactant>
    <organismsDiffer>false</organismsDiffer>
    <experiments>5</experiments>
</comment>
<comment type="interaction">
    <interactant intactId="EBI-713135">
        <id>Q05193</id>
    </interactant>
    <interactant intactId="EBI-1111248">
        <id>Q96RU3</id>
        <label>FNBP1</label>
    </interactant>
    <organismsDiffer>false</organismsDiffer>
    <experiments>5</experiments>
</comment>
<comment type="interaction">
    <interactant intactId="EBI-713135">
        <id>Q05193</id>
    </interactant>
    <interactant intactId="EBI-401755">
        <id>P62993</id>
        <label>GRB2</label>
    </interactant>
    <organismsDiffer>false</organismsDiffer>
    <experiments>6</experiments>
</comment>
<comment type="interaction">
    <interactant intactId="EBI-713135">
        <id>Q05193</id>
    </interactant>
    <interactant intactId="EBI-466029">
        <id>P42858</id>
        <label>HTT</label>
    </interactant>
    <organismsDiffer>false</organismsDiffer>
    <experiments>3</experiments>
</comment>
<comment type="interaction">
    <interactant intactId="EBI-713135">
        <id>Q05193</id>
    </interactant>
    <interactant intactId="EBI-5323863">
        <id>Q5S007</id>
        <label>LRRK2</label>
    </interactant>
    <organismsDiffer>false</organismsDiffer>
    <experiments>4</experiments>
</comment>
<comment type="interaction">
    <interactant intactId="EBI-713135">
        <id>Q05193</id>
    </interactant>
    <interactant intactId="EBI-389883">
        <id>P16333</id>
        <label>NCK1</label>
    </interactant>
    <organismsDiffer>false</organismsDiffer>
    <experiments>2</experiments>
</comment>
<comment type="interaction">
    <interactant intactId="EBI-713135">
        <id>Q05193</id>
    </interactant>
    <interactant intactId="EBI-1391623">
        <id>P29474</id>
        <label>NOS3</label>
    </interactant>
    <organismsDiffer>false</organismsDiffer>
    <experiments>2</experiments>
</comment>
<comment type="interaction">
    <interactant intactId="EBI-713135">
        <id>Q05193</id>
    </interactant>
    <interactant intactId="EBI-1391643">
        <id>Q8IVI9</id>
        <label>NOSTRIN</label>
    </interactant>
    <organismsDiffer>false</organismsDiffer>
    <experiments>3</experiments>
</comment>
<comment type="interaction">
    <interactant intactId="EBI-713135">
        <id>Q05193</id>
    </interactant>
    <interactant intactId="EBI-2481535">
        <id>Q8WV41</id>
        <label>SNX33</label>
    </interactant>
    <organismsDiffer>false</organismsDiffer>
    <experiments>4</experiments>
</comment>
<comment type="interaction">
    <interactant intactId="EBI-713135">
        <id>Q05193</id>
    </interactant>
    <interactant intactId="EBI-77848">
        <id>Q9Y5X1</id>
        <label>SNX9</label>
    </interactant>
    <organismsDiffer>false</organismsDiffer>
    <experiments>3</experiments>
</comment>
<comment type="interaction">
    <interactant intactId="EBI-713135">
        <id>Q05193</id>
    </interactant>
    <interactant intactId="EBI-2822128">
        <id>Q96JI7</id>
        <label>SPG11</label>
    </interactant>
    <organismsDiffer>false</organismsDiffer>
    <experiments>3</experiments>
</comment>
<comment type="interaction">
    <interactant intactId="EBI-8446026">
        <id>Q05193-5</id>
    </interactant>
    <interactant intactId="EBI-367540">
        <id>P68135</id>
        <label>ACTA1</label>
    </interactant>
    <organismsDiffer>true</organismsDiffer>
    <experiments>5</experiments>
</comment>
<comment type="subcellular location">
    <subcellularLocation>
        <location evidence="10">Cell membrane</location>
    </subcellularLocation>
    <subcellularLocation>
        <location evidence="10 26">Membrane</location>
        <location evidence="10 26">Clathrin-coated pit</location>
    </subcellularLocation>
    <subcellularLocation>
        <location evidence="1 2">Cytoplasmic vesicle</location>
    </subcellularLocation>
    <subcellularLocation>
        <location evidence="1">Presynapse</location>
    </subcellularLocation>
    <subcellularLocation>
        <location evidence="3">Cytoplasmic vesicle</location>
        <location evidence="3">Secretory vesicle</location>
        <location evidence="3">Chromaffin granule</location>
    </subcellularLocation>
    <text evidence="10 21">Associated to the membrane in a helical polymer shape in a GTP bound state (PubMed:30069048). Transiently recruited to endocytic clathrin-coated pits (CCPs) at a late stage of clathrin-coated vesicle (CCV) formation (PubMed:15703209).</text>
</comment>
<comment type="alternative products">
    <event type="alternative splicing"/>
    <isoform>
        <id>Q05193-1</id>
        <name>1</name>
        <sequence type="displayed"/>
    </isoform>
    <isoform>
        <id>Q05193-2</id>
        <name>2</name>
        <sequence type="described" ref="VSP_031518"/>
    </isoform>
    <isoform>
        <id>Q05193-3</id>
        <name>3</name>
        <sequence type="described" ref="VSP_031519"/>
    </isoform>
    <isoform>
        <id>Q05193-5</id>
        <name>4</name>
        <sequence type="described" ref="VSP_031518 VSP_031519"/>
    </isoform>
</comment>
<comment type="domain">
    <text evidence="14 30">The dynamin-type G mediates homodimerization and plays a role in self-assembly.</text>
</comment>
<comment type="domain">
    <text evidence="1 24">The C-terminal proline-rich domain (PRD) mediates interaction with SH3-binding partners (By similarity). Is required for DNM1 self-assembly (PubMed:7877694).</text>
</comment>
<comment type="domain">
    <text evidence="8 29">The PH domain binds phosphoinositides such as 1-phosphatidyl-1D-myo-inositol 4,5-bisphosphate, 1-phosphatidyl-1D-myo-inositol 3,4-bisphosphate and 1-phosphatidyl-1D-myo-inositol 3,4,5-trisphosphate, and mediates receptor-mediated endocytosis.</text>
</comment>
<comment type="PTM">
    <text evidence="1 20">Phosphorylation at Ser-774 by GSK3B/GSK3-beta leads to inactivation of receptor-mediated endocytosis in non-neuronal cells (PubMed:29668686). Dephosphorylation at Ser-774, through the EGFR downstream signaling, leads to activation and regulates early stages of clathrin-mediated endocytosis (CME) (PubMed:29668686). Phosphorylated by CDK5 leading to synaptic vesicle endocytosis (SVE) activation (By similarity).</text>
</comment>
<comment type="disease" evidence="16 17 19">
    <disease id="DI-04414">
        <name>Developmental and epileptic encephalopathy 31A</name>
        <acronym>DEE31A</acronym>
        <description>An autosomal dominant epileptic encephalopathy, a heterogeneous group of severe early-onset epilepsies characterized by refractory seizures, neurodevelopmental impairment, and poor prognosis. Development is normal prior to seizure onset, after which cognitive and motor delays become apparent.</description>
        <dbReference type="MIM" id="616346"/>
    </disease>
    <text>The disease is caused by variants affecting the gene represented in this entry.</text>
</comment>
<comment type="disease" evidence="22 23">
    <disease id="DI-06666">
        <name>Developmental and epileptic encephalopathy 31B</name>
        <acronym>DEE31B</acronym>
        <description>A form of epileptic encephalopathy, a heterogeneous group of severe early-onset epilepsies characterized by refractory seizures, neurodevelopmental impairment, and poor prognosis. Development is normal prior to seizure onset, after which cognitive and motor delays become apparent. DEE31B is an autosomal recessive form with onset in the first months of life.</description>
        <dbReference type="MIM" id="620352"/>
    </disease>
    <text>The disease is caused by variants affecting the gene represented in this entry.</text>
</comment>
<comment type="similarity">
    <text evidence="6">Belongs to the TRAFAC class dynamin-like GTPase superfamily. Dynamin/Fzo/YdjA family.</text>
</comment>
<comment type="sequence caution" evidence="35">
    <conflict type="miscellaneous discrepancy">
        <sequence resource="EMBL-CDS" id="AAA02805"/>
    </conflict>
    <text>Probable cloning artifact.</text>
</comment>